<name>PPBT_HUMAN</name>
<keyword id="KW-0002">3D-structure</keyword>
<keyword id="KW-0025">Alternative splicing</keyword>
<keyword id="KW-0091">Biomineralization</keyword>
<keyword id="KW-0106">Calcium</keyword>
<keyword id="KW-1003">Cell membrane</keyword>
<keyword id="KW-0903">Direct protein sequencing</keyword>
<keyword id="KW-0225">Disease variant</keyword>
<keyword id="KW-1015">Disulfide bond</keyword>
<keyword id="KW-0325">Glycoprotein</keyword>
<keyword id="KW-0336">GPI-anchor</keyword>
<keyword id="KW-0378">Hydrolase</keyword>
<keyword id="KW-0449">Lipoprotein</keyword>
<keyword id="KW-0460">Magnesium</keyword>
<keyword id="KW-0472">Membrane</keyword>
<keyword id="KW-0479">Metal-binding</keyword>
<keyword id="KW-0496">Mitochondrion</keyword>
<keyword id="KW-0597">Phosphoprotein</keyword>
<keyword id="KW-1267">Proteomics identification</keyword>
<keyword id="KW-1185">Reference proteome</keyword>
<keyword id="KW-0732">Signal</keyword>
<keyword id="KW-0862">Zinc</keyword>
<protein>
    <recommendedName>
        <fullName evidence="52">Alkaline phosphatase, tissue-nonspecific isozyme</fullName>
        <shortName>AP-TNAP</shortName>
        <shortName evidence="52">TNS-ALP</shortName>
        <shortName>TNSALP</shortName>
        <ecNumber evidence="30 32 33 36">3.1.3.1</ecNumber>
    </recommendedName>
    <alternativeName>
        <fullName evidence="53">Alkaline phosphatase liver/bone/kidney isozyme</fullName>
    </alternativeName>
    <alternativeName>
        <fullName evidence="55">Phosphoamidase</fullName>
    </alternativeName>
    <alternativeName>
        <fullName evidence="2">Phosphocreatine phosphatase</fullName>
        <ecNumber evidence="2">3.9.1.1</ecNumber>
    </alternativeName>
</protein>
<reference key="1">
    <citation type="journal article" date="1986" name="Proc. Natl. Acad. Sci. U.S.A.">
        <title>Isolation and characterization of a cDNA encoding a human liver/bone/kidney-type alkaline phosphatase.</title>
        <authorList>
            <person name="Weiss M.J."/>
            <person name="Henthorn P.S."/>
            <person name="Lafferty M.A."/>
            <person name="Slaughter C."/>
            <person name="Raducha M."/>
            <person name="Harris H."/>
        </authorList>
    </citation>
    <scope>NUCLEOTIDE SEQUENCE [MRNA] (ISOFORM 1)</scope>
    <source>
        <tissue>Osteosarcoma</tissue>
    </source>
</reference>
<reference key="2">
    <citation type="journal article" date="1988" name="J. Biol. Chem.">
        <title>Structure of the human liver/bone/kidney alkaline phosphatase gene.</title>
        <authorList>
            <person name="Weiss M.J."/>
            <person name="Ray K."/>
            <person name="Henthorn P.S."/>
            <person name="Lamb B."/>
            <person name="Kadesch T."/>
            <person name="Harris H."/>
        </authorList>
    </citation>
    <scope>NUCLEOTIDE SEQUENCE [GENOMIC DNA]</scope>
    <source>
        <tissue>Osteosarcoma</tissue>
    </source>
</reference>
<reference key="3">
    <citation type="journal article" date="1989" name="Nucleic Acids Res.">
        <title>Nucleotide sequence of the human liver-type alkaline phosphatase cDNA.</title>
        <authorList>
            <person name="Kishi F."/>
            <person name="Matsuura S."/>
            <person name="Kajii T."/>
        </authorList>
    </citation>
    <scope>NUCLEOTIDE SEQUENCE [MRNA] (ISOFORM 1)</scope>
    <scope>VARIANT HIS-263</scope>
    <source>
        <tissue>Liver</tissue>
    </source>
</reference>
<reference key="4">
    <citation type="journal article" date="1998" name="J. Hum. Genet.">
        <title>A novel missense mutation of the tissue-nonspecific alkaline phosphatase gene detected in a patient with hypophosphatasia.</title>
        <authorList>
            <person name="Sugimoto N."/>
            <person name="Iwamoto S."/>
            <person name="Hoshino Y."/>
            <person name="Kajii E."/>
        </authorList>
    </citation>
    <scope>NUCLEOTIDE SEQUENCE [MRNA] (ISOFORM 1)</scope>
    <scope>VARIANT HOPS PHE-289</scope>
</reference>
<reference key="5">
    <citation type="journal article" date="2004" name="Nat. Genet.">
        <title>Complete sequencing and characterization of 21,243 full-length human cDNAs.</title>
        <authorList>
            <person name="Ota T."/>
            <person name="Suzuki Y."/>
            <person name="Nishikawa T."/>
            <person name="Otsuki T."/>
            <person name="Sugiyama T."/>
            <person name="Irie R."/>
            <person name="Wakamatsu A."/>
            <person name="Hayashi K."/>
            <person name="Sato H."/>
            <person name="Nagai K."/>
            <person name="Kimura K."/>
            <person name="Makita H."/>
            <person name="Sekine M."/>
            <person name="Obayashi M."/>
            <person name="Nishi T."/>
            <person name="Shibahara T."/>
            <person name="Tanaka T."/>
            <person name="Ishii S."/>
            <person name="Yamamoto J."/>
            <person name="Saito K."/>
            <person name="Kawai Y."/>
            <person name="Isono Y."/>
            <person name="Nakamura Y."/>
            <person name="Nagahari K."/>
            <person name="Murakami K."/>
            <person name="Yasuda T."/>
            <person name="Iwayanagi T."/>
            <person name="Wagatsuma M."/>
            <person name="Shiratori A."/>
            <person name="Sudo H."/>
            <person name="Hosoiri T."/>
            <person name="Kaku Y."/>
            <person name="Kodaira H."/>
            <person name="Kondo H."/>
            <person name="Sugawara M."/>
            <person name="Takahashi M."/>
            <person name="Kanda K."/>
            <person name="Yokoi T."/>
            <person name="Furuya T."/>
            <person name="Kikkawa E."/>
            <person name="Omura Y."/>
            <person name="Abe K."/>
            <person name="Kamihara K."/>
            <person name="Katsuta N."/>
            <person name="Sato K."/>
            <person name="Tanikawa M."/>
            <person name="Yamazaki M."/>
            <person name="Ninomiya K."/>
            <person name="Ishibashi T."/>
            <person name="Yamashita H."/>
            <person name="Murakawa K."/>
            <person name="Fujimori K."/>
            <person name="Tanai H."/>
            <person name="Kimata M."/>
            <person name="Watanabe M."/>
            <person name="Hiraoka S."/>
            <person name="Chiba Y."/>
            <person name="Ishida S."/>
            <person name="Ono Y."/>
            <person name="Takiguchi S."/>
            <person name="Watanabe S."/>
            <person name="Yosida M."/>
            <person name="Hotuta T."/>
            <person name="Kusano J."/>
            <person name="Kanehori K."/>
            <person name="Takahashi-Fujii A."/>
            <person name="Hara H."/>
            <person name="Tanase T.-O."/>
            <person name="Nomura Y."/>
            <person name="Togiya S."/>
            <person name="Komai F."/>
            <person name="Hara R."/>
            <person name="Takeuchi K."/>
            <person name="Arita M."/>
            <person name="Imose N."/>
            <person name="Musashino K."/>
            <person name="Yuuki H."/>
            <person name="Oshima A."/>
            <person name="Sasaki N."/>
            <person name="Aotsuka S."/>
            <person name="Yoshikawa Y."/>
            <person name="Matsunawa H."/>
            <person name="Ichihara T."/>
            <person name="Shiohata N."/>
            <person name="Sano S."/>
            <person name="Moriya S."/>
            <person name="Momiyama H."/>
            <person name="Satoh N."/>
            <person name="Takami S."/>
            <person name="Terashima Y."/>
            <person name="Suzuki O."/>
            <person name="Nakagawa S."/>
            <person name="Senoh A."/>
            <person name="Mizoguchi H."/>
            <person name="Goto Y."/>
            <person name="Shimizu F."/>
            <person name="Wakebe H."/>
            <person name="Hishigaki H."/>
            <person name="Watanabe T."/>
            <person name="Sugiyama A."/>
            <person name="Takemoto M."/>
            <person name="Kawakami B."/>
            <person name="Yamazaki M."/>
            <person name="Watanabe K."/>
            <person name="Kumagai A."/>
            <person name="Itakura S."/>
            <person name="Fukuzumi Y."/>
            <person name="Fujimori Y."/>
            <person name="Komiyama M."/>
            <person name="Tashiro H."/>
            <person name="Tanigami A."/>
            <person name="Fujiwara T."/>
            <person name="Ono T."/>
            <person name="Yamada K."/>
            <person name="Fujii Y."/>
            <person name="Ozaki K."/>
            <person name="Hirao M."/>
            <person name="Ohmori Y."/>
            <person name="Kawabata A."/>
            <person name="Hikiji T."/>
            <person name="Kobatake N."/>
            <person name="Inagaki H."/>
            <person name="Ikema Y."/>
            <person name="Okamoto S."/>
            <person name="Okitani R."/>
            <person name="Kawakami T."/>
            <person name="Noguchi S."/>
            <person name="Itoh T."/>
            <person name="Shigeta K."/>
            <person name="Senba T."/>
            <person name="Matsumura K."/>
            <person name="Nakajima Y."/>
            <person name="Mizuno T."/>
            <person name="Morinaga M."/>
            <person name="Sasaki M."/>
            <person name="Togashi T."/>
            <person name="Oyama M."/>
            <person name="Hata H."/>
            <person name="Watanabe M."/>
            <person name="Komatsu T."/>
            <person name="Mizushima-Sugano J."/>
            <person name="Satoh T."/>
            <person name="Shirai Y."/>
            <person name="Takahashi Y."/>
            <person name="Nakagawa K."/>
            <person name="Okumura K."/>
            <person name="Nagase T."/>
            <person name="Nomura N."/>
            <person name="Kikuchi H."/>
            <person name="Masuho Y."/>
            <person name="Yamashita R."/>
            <person name="Nakai K."/>
            <person name="Yada T."/>
            <person name="Nakamura Y."/>
            <person name="Ohara O."/>
            <person name="Isogai T."/>
            <person name="Sugano S."/>
        </authorList>
    </citation>
    <scope>NUCLEOTIDE SEQUENCE [LARGE SCALE MRNA] (ISOFORMS 2 AND 3)</scope>
    <source>
        <tissue>Hippocampus</tissue>
    </source>
</reference>
<reference key="6">
    <citation type="submission" date="2005-03" db="EMBL/GenBank/DDBJ databases">
        <authorList>
            <person name="Totoki Y."/>
            <person name="Toyoda A."/>
            <person name="Takeda T."/>
            <person name="Sakaki Y."/>
            <person name="Tanaka A."/>
            <person name="Yokoyama S."/>
            <person name="Ohara O."/>
            <person name="Nagase T."/>
            <person name="Kikuno R.F."/>
        </authorList>
    </citation>
    <scope>NUCLEOTIDE SEQUENCE [LARGE SCALE MRNA] (ISOFORM 1)</scope>
    <scope>VARIANT HIS-152</scope>
    <source>
        <tissue>Brain</tissue>
    </source>
</reference>
<reference key="7">
    <citation type="journal article" date="2006" name="Nature">
        <title>The DNA sequence and biological annotation of human chromosome 1.</title>
        <authorList>
            <person name="Gregory S.G."/>
            <person name="Barlow K.F."/>
            <person name="McLay K.E."/>
            <person name="Kaul R."/>
            <person name="Swarbreck D."/>
            <person name="Dunham A."/>
            <person name="Scott C.E."/>
            <person name="Howe K.L."/>
            <person name="Woodfine K."/>
            <person name="Spencer C.C.A."/>
            <person name="Jones M.C."/>
            <person name="Gillson C."/>
            <person name="Searle S."/>
            <person name="Zhou Y."/>
            <person name="Kokocinski F."/>
            <person name="McDonald L."/>
            <person name="Evans R."/>
            <person name="Phillips K."/>
            <person name="Atkinson A."/>
            <person name="Cooper R."/>
            <person name="Jones C."/>
            <person name="Hall R.E."/>
            <person name="Andrews T.D."/>
            <person name="Lloyd C."/>
            <person name="Ainscough R."/>
            <person name="Almeida J.P."/>
            <person name="Ambrose K.D."/>
            <person name="Anderson F."/>
            <person name="Andrew R.W."/>
            <person name="Ashwell R.I.S."/>
            <person name="Aubin K."/>
            <person name="Babbage A.K."/>
            <person name="Bagguley C.L."/>
            <person name="Bailey J."/>
            <person name="Beasley H."/>
            <person name="Bethel G."/>
            <person name="Bird C.P."/>
            <person name="Bray-Allen S."/>
            <person name="Brown J.Y."/>
            <person name="Brown A.J."/>
            <person name="Buckley D."/>
            <person name="Burton J."/>
            <person name="Bye J."/>
            <person name="Carder C."/>
            <person name="Chapman J.C."/>
            <person name="Clark S.Y."/>
            <person name="Clarke G."/>
            <person name="Clee C."/>
            <person name="Cobley V."/>
            <person name="Collier R.E."/>
            <person name="Corby N."/>
            <person name="Coville G.J."/>
            <person name="Davies J."/>
            <person name="Deadman R."/>
            <person name="Dunn M."/>
            <person name="Earthrowl M."/>
            <person name="Ellington A.G."/>
            <person name="Errington H."/>
            <person name="Frankish A."/>
            <person name="Frankland J."/>
            <person name="French L."/>
            <person name="Garner P."/>
            <person name="Garnett J."/>
            <person name="Gay L."/>
            <person name="Ghori M.R.J."/>
            <person name="Gibson R."/>
            <person name="Gilby L.M."/>
            <person name="Gillett W."/>
            <person name="Glithero R.J."/>
            <person name="Grafham D.V."/>
            <person name="Griffiths C."/>
            <person name="Griffiths-Jones S."/>
            <person name="Grocock R."/>
            <person name="Hammond S."/>
            <person name="Harrison E.S.I."/>
            <person name="Hart E."/>
            <person name="Haugen E."/>
            <person name="Heath P.D."/>
            <person name="Holmes S."/>
            <person name="Holt K."/>
            <person name="Howden P.J."/>
            <person name="Hunt A.R."/>
            <person name="Hunt S.E."/>
            <person name="Hunter G."/>
            <person name="Isherwood J."/>
            <person name="James R."/>
            <person name="Johnson C."/>
            <person name="Johnson D."/>
            <person name="Joy A."/>
            <person name="Kay M."/>
            <person name="Kershaw J.K."/>
            <person name="Kibukawa M."/>
            <person name="Kimberley A.M."/>
            <person name="King A."/>
            <person name="Knights A.J."/>
            <person name="Lad H."/>
            <person name="Laird G."/>
            <person name="Lawlor S."/>
            <person name="Leongamornlert D.A."/>
            <person name="Lloyd D.M."/>
            <person name="Loveland J."/>
            <person name="Lovell J."/>
            <person name="Lush M.J."/>
            <person name="Lyne R."/>
            <person name="Martin S."/>
            <person name="Mashreghi-Mohammadi M."/>
            <person name="Matthews L."/>
            <person name="Matthews N.S.W."/>
            <person name="McLaren S."/>
            <person name="Milne S."/>
            <person name="Mistry S."/>
            <person name="Moore M.J.F."/>
            <person name="Nickerson T."/>
            <person name="O'Dell C.N."/>
            <person name="Oliver K."/>
            <person name="Palmeiri A."/>
            <person name="Palmer S.A."/>
            <person name="Parker A."/>
            <person name="Patel D."/>
            <person name="Pearce A.V."/>
            <person name="Peck A.I."/>
            <person name="Pelan S."/>
            <person name="Phelps K."/>
            <person name="Phillimore B.J."/>
            <person name="Plumb R."/>
            <person name="Rajan J."/>
            <person name="Raymond C."/>
            <person name="Rouse G."/>
            <person name="Saenphimmachak C."/>
            <person name="Sehra H.K."/>
            <person name="Sheridan E."/>
            <person name="Shownkeen R."/>
            <person name="Sims S."/>
            <person name="Skuce C.D."/>
            <person name="Smith M."/>
            <person name="Steward C."/>
            <person name="Subramanian S."/>
            <person name="Sycamore N."/>
            <person name="Tracey A."/>
            <person name="Tromans A."/>
            <person name="Van Helmond Z."/>
            <person name="Wall M."/>
            <person name="Wallis J.M."/>
            <person name="White S."/>
            <person name="Whitehead S.L."/>
            <person name="Wilkinson J.E."/>
            <person name="Willey D.L."/>
            <person name="Williams H."/>
            <person name="Wilming L."/>
            <person name="Wray P.W."/>
            <person name="Wu Z."/>
            <person name="Coulson A."/>
            <person name="Vaudin M."/>
            <person name="Sulston J.E."/>
            <person name="Durbin R.M."/>
            <person name="Hubbard T."/>
            <person name="Wooster R."/>
            <person name="Dunham I."/>
            <person name="Carter N.P."/>
            <person name="McVean G."/>
            <person name="Ross M.T."/>
            <person name="Harrow J."/>
            <person name="Olson M.V."/>
            <person name="Beck S."/>
            <person name="Rogers J."/>
            <person name="Bentley D.R."/>
        </authorList>
    </citation>
    <scope>NUCLEOTIDE SEQUENCE [LARGE SCALE GENOMIC DNA]</scope>
</reference>
<reference key="8">
    <citation type="submission" date="2005-07" db="EMBL/GenBank/DDBJ databases">
        <authorList>
            <person name="Mural R.J."/>
            <person name="Istrail S."/>
            <person name="Sutton G."/>
            <person name="Florea L."/>
            <person name="Halpern A.L."/>
            <person name="Mobarry C.M."/>
            <person name="Lippert R."/>
            <person name="Walenz B."/>
            <person name="Shatkay H."/>
            <person name="Dew I."/>
            <person name="Miller J.R."/>
            <person name="Flanigan M.J."/>
            <person name="Edwards N.J."/>
            <person name="Bolanos R."/>
            <person name="Fasulo D."/>
            <person name="Halldorsson B.V."/>
            <person name="Hannenhalli S."/>
            <person name="Turner R."/>
            <person name="Yooseph S."/>
            <person name="Lu F."/>
            <person name="Nusskern D.R."/>
            <person name="Shue B.C."/>
            <person name="Zheng X.H."/>
            <person name="Zhong F."/>
            <person name="Delcher A.L."/>
            <person name="Huson D.H."/>
            <person name="Kravitz S.A."/>
            <person name="Mouchard L."/>
            <person name="Reinert K."/>
            <person name="Remington K.A."/>
            <person name="Clark A.G."/>
            <person name="Waterman M.S."/>
            <person name="Eichler E.E."/>
            <person name="Adams M.D."/>
            <person name="Hunkapiller M.W."/>
            <person name="Myers E.W."/>
            <person name="Venter J.C."/>
        </authorList>
    </citation>
    <scope>NUCLEOTIDE SEQUENCE [LARGE SCALE GENOMIC DNA]</scope>
</reference>
<reference key="9">
    <citation type="journal article" date="2004" name="Genome Res.">
        <title>The status, quality, and expansion of the NIH full-length cDNA project: the Mammalian Gene Collection (MGC).</title>
        <authorList>
            <consortium name="The MGC Project Team"/>
        </authorList>
    </citation>
    <scope>NUCLEOTIDE SEQUENCE [LARGE SCALE MRNA] (ISOFORM 1)</scope>
    <scope>VARIANT HIS-263</scope>
    <source>
        <tissue>Brain</tissue>
        <tissue>Cerebellum</tissue>
        <tissue>Lymphoma</tissue>
        <tissue>Peripheral nerve</tissue>
    </source>
</reference>
<reference key="10">
    <citation type="journal article" date="1986" name="Arch. Biochem. Biophys.">
        <title>Human liver alkaline phosphatase, purification and partial sequencing: homology with the placental isozyme.</title>
        <authorList>
            <person name="Garattini E."/>
            <person name="Hua J.-C."/>
            <person name="Pan Y.C.E."/>
            <person name="Udenfriend S."/>
        </authorList>
    </citation>
    <scope>PROTEIN SEQUENCE OF 18-49</scope>
    <source>
        <tissue>Liver</tissue>
    </source>
</reference>
<reference key="11">
    <citation type="journal article" date="1992" name="Clin. Chem.">
        <title>Chemical nature of intestinal-type alkaline phosphatase in human kidney.</title>
        <authorList>
            <person name="Nishihara Y."/>
            <person name="Hayashi Y."/>
            <person name="Adachi T."/>
            <person name="Koyama I."/>
            <person name="Stigbrand T."/>
            <person name="Hirano K."/>
        </authorList>
    </citation>
    <scope>PROTEIN SEQUENCE OF 18-32</scope>
    <scope>GLYCOSYLATION</scope>
</reference>
<reference key="12">
    <citation type="journal article" date="1990" name="Am. J. Hum. Genet.">
        <title>Alkaline phosphatase (tissue-nonspecific isoenzyme) is a phosphoethanolamine and pyridoxal-5'-phosphate ectophosphatase: normal and hypophosphatasia fibroblast study.</title>
        <authorList>
            <person name="Fedde K.N."/>
            <person name="Whyte M.P."/>
        </authorList>
    </citation>
    <scope>FUNCTION</scope>
    <scope>CATALYTIC ACTIVITY</scope>
    <scope>SUBCELLULAR LOCATION</scope>
</reference>
<reference key="13">
    <citation type="journal article" date="2001" name="J. Biol. Chem.">
        <title>Structural evidence for a functional role of human tissue nonspecific alkaline phosphatase in bone mineralization.</title>
        <authorList>
            <person name="Mornet E."/>
            <person name="Stura E."/>
            <person name="Lia-Baldini A.S."/>
            <person name="Stigbrand T."/>
            <person name="Menez A."/>
            <person name="Le Du M.H."/>
        </authorList>
    </citation>
    <scope>COFACTOR</scope>
    <scope>VARIANTS HOPS ARG-76 AND ARG-171</scope>
</reference>
<reference key="14">
    <citation type="journal article" date="2007" name="Proteomics">
        <title>Computational approach for identification and characterization of GPI-anchored peptides in proteomics experiments.</title>
        <authorList>
            <person name="Omaetxebarria M.J."/>
            <person name="Elortza F."/>
            <person name="Rodriguez-Suarez E."/>
            <person name="Aloria K."/>
            <person name="Arizmendi J.M."/>
            <person name="Jensen O.N."/>
            <person name="Matthiesen R."/>
        </authorList>
    </citation>
    <scope>IDENTIFICATION BY MASS SPECTROMETRY</scope>
</reference>
<reference key="15">
    <citation type="journal article" date="2009" name="J. Proteome Res.">
        <title>Glycoproteomics analysis of human liver tissue by combination of multiple enzyme digestion and hydrazide chemistry.</title>
        <authorList>
            <person name="Chen R."/>
            <person name="Jiang X."/>
            <person name="Sun D."/>
            <person name="Han G."/>
            <person name="Wang F."/>
            <person name="Ye M."/>
            <person name="Wang L."/>
            <person name="Zou H."/>
        </authorList>
    </citation>
    <scope>GLYCOSYLATION [LARGE SCALE ANALYSIS] AT ASN-430</scope>
    <source>
        <tissue>Liver</tissue>
    </source>
</reference>
<reference key="16">
    <citation type="journal article" date="2011" name="Sci. Signal.">
        <title>System-wide temporal characterization of the proteome and phosphoproteome of human embryonic stem cell differentiation.</title>
        <authorList>
            <person name="Rigbolt K.T."/>
            <person name="Prokhorova T.A."/>
            <person name="Akimov V."/>
            <person name="Henningsen J."/>
            <person name="Johansen P.T."/>
            <person name="Kratchmarova I."/>
            <person name="Kassem M."/>
            <person name="Mann M."/>
            <person name="Olsen J.V."/>
            <person name="Blagoev B."/>
        </authorList>
    </citation>
    <scope>IDENTIFICATION BY MASS SPECTROMETRY [LARGE SCALE ANALYSIS]</scope>
</reference>
<reference key="17">
    <citation type="journal article" date="2015" name="PLoS ONE">
        <title>Functional significance of calcium binding to tissue-nonspecific alkaline phosphatase.</title>
        <authorList>
            <person name="Hoylaerts M.F."/>
            <person name="Van Kerckhoven S."/>
            <person name="Kiffer-Moreira T."/>
            <person name="Sheen C."/>
            <person name="Narisawa S."/>
            <person name="Millan J.L."/>
        </authorList>
    </citation>
    <scope>FUNCTION</scope>
    <scope>CATALYTIC ACTIVITY</scope>
    <scope>COFACTOR</scope>
    <scope>DOMAIN</scope>
    <scope>MUTAGENESIS OF GLU-235; TRP-270; ARG-272; PHE-290; GLU-291 AND ASP-306</scope>
</reference>
<reference key="18">
    <citation type="journal article" date="2010" name="J. Inherit. Metab. Dis.">
        <title>Perinatal hypophosphatasia presenting as neonatal epileptic encephalopathy with abnormal neurotransmitter metabolism secondary to reduced co-factor pyridoxal-5'-phosphate availability.</title>
        <authorList>
            <person name="Balasubramaniam S."/>
            <person name="Bowling F."/>
            <person name="Carpenter K."/>
            <person name="Earl J."/>
            <person name="Chaitow J."/>
            <person name="Pitt J."/>
            <person name="Mornet E."/>
            <person name="Sillence D."/>
            <person name="Ellaway C."/>
        </authorList>
    </citation>
    <scope>FUNCTION</scope>
    <scope>INVOLVEMENT IN HOPS</scope>
</reference>
<reference key="19">
    <citation type="journal article" date="2017" name="PLoS ONE">
        <title>Human alkaline phosphatase dephosphorylates microbial products and is elevated in preterm neonates with a history of late-onset sepsis.</title>
        <authorList>
            <person name="Pettengill M."/>
            <person name="Matute J.D."/>
            <person name="Tresenriter M."/>
            <person name="Hibbert J."/>
            <person name="Burgner D."/>
            <person name="Richmond P."/>
            <person name="Millan J.L."/>
            <person name="Ozonoff A."/>
            <person name="Strunk T."/>
            <person name="Currie A."/>
            <person name="Levy O."/>
        </authorList>
    </citation>
    <scope>FUNCTION</scope>
</reference>
<reference key="20">
    <citation type="journal article" date="1988" name="Proc. Natl. Acad. Sci. U.S.A.">
        <title>A missense mutation in the human liver/bone/kidney alkaline phosphatase gene causing a lethal form of hypophosphatasia.</title>
        <authorList>
            <person name="Weiss M.J."/>
            <person name="Cole D.E.C."/>
            <person name="Ray K."/>
            <person name="Whyte M.P."/>
            <person name="Lafferty M.A."/>
            <person name="Mulivor R.A."/>
            <person name="Harris H."/>
        </authorList>
    </citation>
    <scope>VARIANT HOPS THR-179</scope>
</reference>
<reference key="21">
    <citation type="journal article" date="1992" name="Proc. Natl. Acad. Sci. U.S.A.">
        <title>Different missense mutations at the tissue-nonspecific alkaline phosphatase gene locus in autosomal recessively inherited forms of mild and severe hypophosphatasia.</title>
        <authorList>
            <person name="Henthorn P.S."/>
            <person name="Raducha M."/>
            <person name="Fedde K.N."/>
            <person name="Lafferty M.A."/>
            <person name="Whyte M.P."/>
        </authorList>
    </citation>
    <scope>VARIANTS HOPS VAL-33; CYS-71; PRO-71; LYS-191; PRO-207; ALA-294; VAL-378 AND HIS-436</scope>
    <scope>VARIANT HIS-263</scope>
</reference>
<reference key="22">
    <citation type="journal article" date="1993" name="Genomics">
        <title>A homoallelic Gly317--&gt;Asp mutation in ALPL causes the perinatal (lethal) form of hypophosphatasia in Canadian mennonites.</title>
        <authorList>
            <person name="Greenberg C.R."/>
            <person name="Taylor C.L."/>
            <person name="Haworth J.C."/>
            <person name="Seargeant L.E."/>
            <person name="Philipps S."/>
            <person name="Triggs-Raine B."/>
            <person name="Chodirker B.N."/>
        </authorList>
    </citation>
    <scope>VARIANT HOPS ASP-334</scope>
</reference>
<reference key="23">
    <citation type="journal article" date="1994" name="Hum. Mol. Genet.">
        <title>Novel missense and frameshift mutations in the tissue-nonspecific alkaline phosphatase gene in a Japanese patient with hypophosphatasia.</title>
        <authorList>
            <person name="Orimo H."/>
            <person name="Hayashi Z."/>
            <person name="Watanabe A."/>
            <person name="Hirayama T."/>
            <person name="Hirayama T."/>
            <person name="Shimada T."/>
        </authorList>
    </citation>
    <scope>INVOLVEMENT IN HPPI</scope>
    <scope>VARIANT HPPI LYS-298</scope>
</reference>
<reference key="24">
    <citation type="journal article" date="1996" name="J. Clin. Endocrinol. Metab.">
        <title>Identification of novel missense mutations (Phe310Leu and Gly439Arg) in a neonatal case of hypophosphatasia.</title>
        <authorList>
            <person name="Ozono K."/>
            <person name="Yamagata M."/>
            <person name="Michigami T."/>
            <person name="Nakajima S."/>
            <person name="Sakai N."/>
            <person name="Cai G."/>
            <person name="Satomura K."/>
            <person name="Yasui N."/>
            <person name="Okada S."/>
            <person name="Nakayama M."/>
        </authorList>
    </citation>
    <scope>INVOLVEMENT IN HPPI</scope>
    <scope>VARIANTS HPPI LEU-327 AND ARG-456</scope>
</reference>
<reference key="25">
    <citation type="journal article" date="1998" name="Eur. J. Hum. Genet.">
        <title>Identification of fifteen novel mutations in the tissue-nonspecific alkaline phosphatase (TNSALP) gene in European patients with severe hypophosphatasia.</title>
        <authorList>
            <person name="Mornet E."/>
            <person name="Taillandier A."/>
            <person name="Peyramaure S."/>
            <person name="Kaper F."/>
            <person name="Muller F."/>
            <person name="Brenner R."/>
            <person name="Bussiere P."/>
            <person name="Freisinger P."/>
            <person name="Godard J."/>
            <person name="Le Merrer M."/>
            <person name="Oury J.F."/>
            <person name="Plauchu H."/>
            <person name="Puddu R."/>
            <person name="Rival J.M."/>
            <person name="Superti-Furga A."/>
            <person name="Touraine R.L."/>
            <person name="Serre J.L."/>
            <person name="Simon-Bouy B."/>
        </authorList>
    </citation>
    <scope>VARIANTS HOPS PHE-17; VAL-40; SER-75; ARG-120; ARG-129; ASP-170; TRP-184; LYS-191; TRP-223; LYS-291; ASP-334; PRO-445; CYS-450; SER-473 AND ARG-491</scope>
    <scope>VARIANT HIS-263</scope>
</reference>
<reference key="26">
    <citation type="journal article" date="1998" name="Hum. Mutat. Suppl.">
        <title>Hypophosphatasia: identification of five novel missense mutations (G507A, G705A, A748G, T1155C, G1320A) in the tissue-nonspecific alkaline phosphatase gene among Japanese patients.</title>
        <authorList>
            <person name="Goseki-Sone M."/>
            <person name="Orimo H."/>
            <person name="Iimura T."/>
            <person name="Takagi Y."/>
            <person name="Watanabe H."/>
            <person name="Taketa K."/>
            <person name="Sato S."/>
            <person name="Mayanagi H."/>
            <person name="Shimada T."/>
            <person name="Oida S."/>
        </authorList>
    </citation>
    <scope>VARIANTS HOPS THR-111; THR-177; GLY-191; LEU-327 AND ILE-382</scope>
</reference>
<reference key="27">
    <citation type="journal article" date="1999" name="Hum. Mol. Genet.">
        <title>Correlations of genotype and phenotype in hypophosphatasia.</title>
        <authorList>
            <person name="Zurutuza L."/>
            <person name="Muller F."/>
            <person name="Gibrat J.F."/>
            <person name="Taillandier A."/>
            <person name="Simon-Bouy B."/>
            <person name="Serre J.L."/>
            <person name="Mornet E."/>
        </authorList>
    </citation>
    <scope>VARIANTS HOPS VAL-40; LEU-62; SER-75; THR-111; ARG-120; ARG-129; HIS-136; VAL-162; ASP-170; TYR-171; TRP-184; LYS-191; TRP-223; VAL-249; LYS-291; VAL-306; ASP-334; CYS-391; PRO-445; CYS-450; SER-473; LYS-476 AND ARG-491</scope>
    <scope>3D-STRUCTURE MODELING</scope>
    <scope>CHARACTERIZATION OF VARIANTS</scope>
</reference>
<reference key="28">
    <citation type="journal article" date="1999" name="Hum. Mutat.">
        <title>Characterization of eleven novel mutations (M45L, R119H, 544delG, G145V, H154Y, C184Y, D289V, 862+5A, 1172delC, R411X, E459K) in the tissue-nonspecific alkaline phosphatase (TNSALP) gene in patients with severe hypophosphatasia.</title>
        <authorList>
            <person name="Taillandier A."/>
            <person name="Zurutuza L."/>
            <person name="Muller F."/>
            <person name="Simon-Bouy B."/>
            <person name="Serre J.L."/>
            <person name="Bird L."/>
            <person name="Brenner R."/>
            <person name="Boute O."/>
            <person name="Cousin J."/>
            <person name="Gaillard D."/>
            <person name="Heidemann P.H."/>
            <person name="Steinmann B."/>
            <person name="Wallot M."/>
            <person name="Mornet E."/>
        </authorList>
    </citation>
    <scope>VARIANTS HOPS LEU-62; HIS-136; VAL-162; TYR-171; LYS-191; TYR-201; VAL-249; VAL-306 AND LYS-476</scope>
</reference>
<reference key="29">
    <citation type="journal article" date="2000" name="Eur. J. Pediatr.">
        <title>Severe hypercalcaemia and respiratory insufficiency associated with infantile hypophosphatasia caused by two novel mutations of the tissue-nonspecific alkaline phosphatase gene.</title>
        <authorList>
            <person name="Mochizuki H."/>
            <person name="Saito M."/>
            <person name="Michigami T."/>
            <person name="Ohashi H."/>
            <person name="Koda N."/>
            <person name="Yamaguchi S."/>
            <person name="Ozono K."/>
        </authorList>
    </citation>
    <scope>VARIANTS HPPI GLU-224 AND CYS-426</scope>
</reference>
<reference key="30">
    <citation type="journal article" date="2000" name="Hum. Mutat.">
        <title>Fifteen new mutations (-195C&gt;T, L-12X, 298-2A&gt;G, T117N, A159T, R229S, 997+2T&gt;A, E274X, A331T, H364R, D389G, 1256delC, R433H, N461I, C472S) in the tissue-nonspecific alkaline phosphatase (TNSALP) gene in patients with hypophosphatasia.</title>
        <authorList>
            <person name="Taillandier A."/>
            <person name="Cozien E."/>
            <person name="Muller F."/>
            <person name="Merrien Y."/>
            <person name="Bonnin E."/>
            <person name="Fribourg C."/>
            <person name="Simon-Bouy B."/>
            <person name="Serre J.L."/>
            <person name="Bieth E."/>
            <person name="Brenner R."/>
            <person name="Cordier M.P."/>
            <person name="De Bie S."/>
            <person name="Fellmann F."/>
            <person name="Freisinger P."/>
            <person name="Hesse V."/>
            <person name="Hennekam R.C.M."/>
            <person name="Josifova D."/>
            <person name="Kerzin-Storrar L."/>
            <person name="Leporrier N."/>
            <person name="Zabot M.-T."/>
            <person name="Mornet E."/>
        </authorList>
    </citation>
    <scope>VARIANTS HOPS VAL-40; THR-111; ASN-134; THR-176; LYS-191; TYR-201; SER-246; THR-348; ARG-381; GLY-406; HIS-450; ILE-478 AND SER-489</scope>
</reference>
<reference key="31">
    <citation type="journal article" date="2000" name="J. Clin. Endocrinol. Metab.">
        <title>Asp361Val mutant of alkaline phosphatase found in patients with dominantly inherited hypophosphatasia inhibits the activity of the wild-type enzyme.</title>
        <authorList>
            <person name="Mueller H.L."/>
            <person name="Yamazaki M."/>
            <person name="Michigami T."/>
            <person name="Kageyama T."/>
            <person name="Schoenau E."/>
            <person name="Schneider P."/>
            <person name="Ozono K."/>
        </authorList>
    </citation>
    <scope>VARIANT HOPS VAL-378</scope>
    <scope>VARIANT ALA-522</scope>
</reference>
<reference key="32">
    <citation type="journal article" date="2001" name="Am. J. Med. Genet.">
        <title>Perinatal hypophosphatasia: radiology, pathology and molecular biology studies in a family harboring a splicing mutation (648+1A) and a novel missense mutation (N400S) in the tissue-nonspecific alkaline phosphatase (TNSALP) gene.</title>
        <authorList>
            <person name="Sergi C."/>
            <person name="Mornet E."/>
            <person name="Troeger J."/>
            <person name="Voigtlaender T."/>
        </authorList>
    </citation>
    <scope>VARIANT HOPS SER-417</scope>
</reference>
<reference key="33">
    <citation type="journal article" date="2001" name="Hum. Genet.">
        <title>A molecular approach to dominance in hypophosphatasia.</title>
        <authorList>
            <person name="Lia-Baldini A.S."/>
            <person name="Muller F."/>
            <person name="Taillandier A."/>
            <person name="Gibrat J.F."/>
            <person name="Mouchard M."/>
            <person name="Robin B."/>
            <person name="Simon-Bouy B."/>
            <person name="Serre J.L."/>
            <person name="Aylsworth A.S."/>
            <person name="Bieth E."/>
            <person name="Delanote S."/>
            <person name="Freisinger P."/>
            <person name="Hu J.C.-C."/>
            <person name="Krohn H.-P."/>
            <person name="Nunes M.E."/>
            <person name="Mornet E."/>
        </authorList>
    </citation>
    <scope>CHARACTERIZATION OF VARIANTS HOPS VAL-40; VAL-63; THR-116; LEU-181; TRP-184; TRP-223; VAL-249; VAL-378; ILE-478 AND PHE-490</scope>
</reference>
<reference key="34">
    <citation type="journal article" date="2001" name="Hum. Mutat.">
        <title>Twelve novel mutations in the tissue-nonspecific alkaline phosphatase gene (ALPL) in patients with various forms of hypophosphatasia.</title>
        <authorList>
            <person name="Taillandier A."/>
            <person name="Lia-Baldini A.S."/>
            <person name="Mouchard M."/>
            <person name="Robin B."/>
            <person name="Muller F."/>
            <person name="Simon-Bouy B."/>
            <person name="Serre J.L."/>
            <person name="Bera-Louville A."/>
            <person name="Bonduelle M."/>
            <person name="Eckhardt J."/>
            <person name="Gaillard D."/>
            <person name="Myhre A.G."/>
            <person name="Koertge-Jung S."/>
            <person name="Larget-Piet L."/>
            <person name="Malou E."/>
            <person name="Sillence D."/>
            <person name="Temple I.K."/>
            <person name="Viot G."/>
            <person name="Mornet E."/>
        </authorList>
    </citation>
    <scope>VARIANTS HPPI CYS-28 AND MET-459</scope>
    <scope>VARIANTS HOPS VAL-40; VAL-51; HIS-71; THR-116; HIS-136; HIS-152; THR-176; THR-179; LYS-191; ASP-211; VAL-220; GLY-235; TYR-294; GLY-327; SER-399 AND ALA-423</scope>
</reference>
<reference key="35">
    <citation type="journal article" date="2001" name="J. Bone Miner. Res.">
        <title>Mutational analysis and functional correlation with phenotype in German patients with childhood-type hypophosphatasia.</title>
        <authorList>
            <person name="Orimo H."/>
            <person name="Girschick H.J."/>
            <person name="Goseki-Sone M."/>
            <person name="Ito M."/>
            <person name="Oda K."/>
            <person name="Shimada T."/>
        </authorList>
    </citation>
    <scope>INVOLVEMENT IN HPPC</scope>
    <scope>VARIANTS HPPC MET-68; SER-71; THR-177; TRP-223; PRO-275 AND HIS-391</scope>
    <scope>CHARACTERIZATION OF VARIANTS HPPC MET-68; SER-71; THR-177; TRP-223; PRO-275 AND HIS-391</scope>
    <scope>VARIANT ALA-522</scope>
    <scope>CHARACTERIZATION OF VARIANT ALA-522</scope>
</reference>
<reference key="36">
    <citation type="journal article" date="2001" name="Oral Dis.">
        <title>A novel point mutation (C571T) in the tissue-non-specific alkaline phosphatase gene in a case of adult-type hypophosphatasia.</title>
        <authorList>
            <person name="Watanabe H."/>
            <person name="Hashimoto-Uoshima M."/>
            <person name="Goseki-Sone M."/>
            <person name="Orimo H."/>
            <person name="Ishikawa I."/>
        </authorList>
    </citation>
    <scope>VARIANT HOPS VAL-132</scope>
</reference>
<reference key="37">
    <citation type="journal article" date="2002" name="J. Bone Miner. Res.">
        <title>Kinetic characterization of hypophosphatasia mutations with physiological substrates.</title>
        <authorList>
            <person name="Di Mauro S."/>
            <person name="Manes T."/>
            <person name="Hessle L."/>
            <person name="Kozlenkov A."/>
            <person name="Pizauro J.M."/>
            <person name="Hoylaerts M.F."/>
            <person name="Millan J.L."/>
        </authorList>
    </citation>
    <scope>VARIANTS HOPS VAL-33; CYS-71; PRO-71; THR-111; VAL-132; THR-177; THR-179; GLY-191; LYS-191; TRP-223; ALA-294; ASP-334; VAL-378; ILE-382 AND ARG-456</scope>
    <scope>VARIANT HPPI LYS-298</scope>
    <scope>CHARACTERIZATION OF VARIANTS HOPS VAL-33; CYS-71; PRO-71; THR-111; VAL-132; THR-177; THR-179; GLY-191; LYS-191; TRP-223; ALA-294; ASP-334; VAL-378; ILE-382 AND ARG-456</scope>
    <scope>CHARACTERIZATION OF VARIANT HPPI LYS-298</scope>
    <scope>FUNCTION</scope>
    <scope>CATALYTIC ACTIVITY</scope>
</reference>
<reference key="38">
    <citation type="journal article" date="2002" name="J. Inherit. Metab. Dis.">
        <title>Glu274Lys/Gly309Arg mutation of the tissue-nonspecific alkaline phosphatase gene in neonatal hypophosphatasia associated with convulsions.</title>
        <authorList>
            <person name="Litmanovitz I."/>
            <person name="Reish O."/>
            <person name="Dolfin T."/>
            <person name="Arnon S."/>
            <person name="Regev R."/>
            <person name="Grinshpan G."/>
            <person name="Yamazaki M."/>
            <person name="Ozono K."/>
        </authorList>
    </citation>
    <scope>VARIANTS HOPS LYS-291 AND ARG-326</scope>
</reference>
<reference key="39">
    <citation type="journal article" date="2002" name="Mol. Genet. Metab.">
        <title>Denaturing gradient gel electrophoresis analysis of the tissue nonspecific alkaline phosphatase isoenzyme gene in hypophosphatasia.</title>
        <authorList>
            <person name="Mumm S."/>
            <person name="Jones J."/>
            <person name="Finnegan P."/>
            <person name="Henthorn P.S."/>
            <person name="Podgornik M.N."/>
            <person name="Whyte M.P."/>
        </authorList>
    </citation>
    <scope>VARIANTS HOPS SER-51; HIS-71; THR-111; MET-128; HIS-134; HIS-136; THR-176; LYS-191; GLN-223; TRP-223; SER-246; ALA-294; PRO-299; PHE-327 DEL; ARG-339; THR-348; VAL-378; MET-414; ASP-426 AND LYS-476</scope>
    <scope>VARIANTS HIS-263 AND ALA-522</scope>
</reference>
<reference key="40">
    <citation type="journal article" date="2002" name="Ultrasound Obstet. Gynecol.">
        <title>Hypophosphatasia associated with increased nuchal translucency: a report of two affected pregnancies.</title>
        <authorList>
            <person name="Souka A.P."/>
            <person name="Raymond F.L."/>
            <person name="Mornet E."/>
            <person name="Geerts L."/>
            <person name="Nicolaides K.H."/>
        </authorList>
    </citation>
    <scope>VARIANTS HOPS PHE-212 AND ASP-354</scope>
</reference>
<reference key="41">
    <citation type="journal article" date="2003" name="Hum. Mutat.">
        <title>Severe hypophosphatasia: characterization of fifteen novel mutations in the ALPL gene.</title>
        <authorList>
            <person name="Spentchian M."/>
            <person name="Merrien Y."/>
            <person name="Herasse M."/>
            <person name="Dobbie Z."/>
            <person name="Glaeser D."/>
            <person name="Holder S.E."/>
            <person name="Ivarsson S.-A."/>
            <person name="Kostiner D."/>
            <person name="Mansour S."/>
            <person name="Norman A."/>
            <person name="Roth J."/>
            <person name="Stipoljev F."/>
            <person name="Taillemite J.-L."/>
            <person name="van der Smagt J.J."/>
            <person name="Serre J.-L."/>
            <person name="Simon-Bouy B."/>
            <person name="Taillandier A."/>
            <person name="Mornet E."/>
        </authorList>
    </citation>
    <scope>VARIANTS HOPS VAL-62; ARG-63; THR-111; ILE-148; SER-162; GLU-189; ALA-220; LEU-272; 293-GLY-ASP-294 DEL; LYS-311; LYS-452 AND THR-468</scope>
</reference>
<reference key="42">
    <citation type="journal article" date="2003" name="J. Med. Genet.">
        <title>Molecular study of three cases of odontohypophosphatasia resulting from heterozygosity for mutations in the tissue non-specific alkaline phosphatase gene.</title>
        <authorList>
            <person name="Herasse M."/>
            <person name="Spentchian M."/>
            <person name="Taillandier A."/>
            <person name="Keppler-Noreuil K."/>
            <person name="Fliorito A.N.M."/>
            <person name="Bergoffen J."/>
            <person name="Wallerstein R."/>
            <person name="Muti C."/>
            <person name="Simon-Bouy B."/>
            <person name="Mornet E."/>
        </authorList>
    </citation>
    <scope>VARIANTS HOPS LEU-108; THR-116 AND MET-414</scope>
    <scope>CHARACTERIZATION OF VARIANT HOPS LEU-108</scope>
</reference>
<reference key="43">
    <citation type="journal article" date="2004" name="Arch. Pediatr.">
        <title>Childhood hypophosphatasia: a case report due to a novel mutation.</title>
        <authorList>
            <person name="Draguet C."/>
            <person name="Gillerot Y."/>
            <person name="Mornet E."/>
        </authorList>
    </citation>
    <scope>VARIANT HOPS GLY-114</scope>
</reference>
<reference key="44">
    <citation type="journal article" date="2005" name="Mol. Genet. Metab.">
        <title>Characterization of 11 novel mutations in the tissue non-specific alkaline phosphatase gene responsible for hypophosphatasia and genotype-phenotype correlations.</title>
        <authorList>
            <person name="Brun-Heath I."/>
            <person name="Taillandier A."/>
            <person name="Serre J.-L."/>
            <person name="Mornet E."/>
        </authorList>
    </citation>
    <scope>VARIANTS HOPS VAL-33; HIS-136; GLN-223; TRP-223; HIS-272; THR-292; ALA-294; THR-295; ASP-297; ASP-334 AND ALA-411</scope>
    <scope>CHARACTERIZATION OF VARIANTS HOPS VAL-33; HIS-272; THR-292; THR-295; ASP-297 AND ALA-411</scope>
</reference>
<reference key="45">
    <citation type="journal article" date="2009" name="BMC Med. Genet.">
        <title>Mild forms of hypophosphatasia mostly result from dominant negative effect of severe alleles or from compound heterozygosity for severe and moderate alleles.</title>
        <authorList>
            <person name="Fauvert D."/>
            <person name="Brun-Heath I."/>
            <person name="Lia-Baldini A.S."/>
            <person name="Bellazi L."/>
            <person name="Taillandier A."/>
            <person name="Serre J.L."/>
            <person name="de Mazancourt P."/>
            <person name="Mornet E."/>
        </authorList>
    </citation>
    <scope>VARIANTS HOPS CYS-71; HIS-71; THR-111; THR-176; LYS-191; ARG-334; ASP-334; ARG-339; ILE-382; CYS-391; HIS-391; MET-414; ALA-420; LYS-452; LEU-459 AND ALA-476</scope>
    <scope>CHARACTERIZATION OF VARIANTS HOPS CYS-71; HIS-71; THR-111; THR-176; LYS-191; ARG-334; ASP-334; ARG-339; ILE-382; CYS-391; HIS-391; MET-414; LYS-452; LEU-459 AND ALA-476</scope>
</reference>
<reference key="46">
    <citation type="journal article" date="2012" name="Biochim. Biophys. Acta">
        <title>Disulfide bonds are critical for tissue-nonspecific alkaline phosphatase function revealed by analysis of mutant proteins bearing a C(201)-Y or C(489)-S substitution associated with severe hypophosphatasia.</title>
        <authorList>
            <person name="Satou Y."/>
            <person name="Al-Shawafi H.A."/>
            <person name="Sultana S."/>
            <person name="Makita S."/>
            <person name="Sohda M."/>
            <person name="Oda K."/>
        </authorList>
    </citation>
    <scope>VARIANTS HOPS TYR-201 AND SER-489</scope>
    <scope>CHARACTERIZATION OF VARIANTS HOPS TYR-201 AND SER-489</scope>
</reference>
<reference key="47">
    <citation type="journal article" date="2012" name="FEBS J.">
        <title>A dimerization defect caused by a glycine substitution at position 420 by serine in tissue-nonspecific alkaline phosphatase associated with perinatal hypophosphatasia.</title>
        <authorList>
            <person name="Makita S."/>
            <person name="Al-Shawafi H.A."/>
            <person name="Sultana S."/>
            <person name="Sohda M."/>
            <person name="Nomura S."/>
            <person name="Oda K."/>
        </authorList>
    </citation>
    <scope>CHARACTERIZATION OF VARIANTS HOPS SER-420 AND ALA-420</scope>
    <scope>CATALYTIC ACTIVITY</scope>
</reference>
<reference key="48">
    <citation type="journal article" date="2013" name="Bone">
        <title>Novel ALPL genetic alteration associated with an odontohypophosphatasia phenotype.</title>
        <authorList>
            <person name="Martins L."/>
            <person name="Rodrigues T.L."/>
            <person name="Ribeiro M.M."/>
            <person name="Saito M.T."/>
            <person name="Giorgetti A.P."/>
            <person name="Casati M.Z."/>
            <person name="Sallum E.A."/>
            <person name="Foster B.L."/>
            <person name="Somerman M.J."/>
            <person name="Nociti F.H. Jr."/>
        </authorList>
    </citation>
    <scope>VARIANTS HOPS CYS-152 AND ASN-440 DEL</scope>
</reference>
<reference key="49">
    <citation type="journal article" date="2013" name="Mol. Genet. Metab.">
        <title>An asparagine at position 417 of tissue-nonspecific alkaline phosphatase is essential for its structure and function as revealed by analysis of the N417S mutation associated with severe hypophosphatasia.</title>
        <authorList>
            <person name="Sultana S."/>
            <person name="Al-Shawafi H.A."/>
            <person name="Makita S."/>
            <person name="Sohda M."/>
            <person name="Amizuka N."/>
            <person name="Takagi R."/>
            <person name="Oda K."/>
        </authorList>
    </citation>
    <scope>CHARACTERIZATION OF VARIANT HOPS SER-417</scope>
    <scope>SUBUNIT</scope>
    <scope>SUBCELLULAR LOCATION</scope>
    <scope>FUNCTION</scope>
    <scope>CATALYTIC ACTIVITY</scope>
</reference>
<reference key="50">
    <citation type="journal article" date="2015" name="Mol. Genet. Metab.">
        <title>Molecular phenotype of tissue-nonspecific alkaline phosphatase with a proline (108) to leucine substitution associated with dominant odontohypophosphatasia.</title>
        <authorList>
            <person name="Numa-Kinjoh N."/>
            <person name="Komaru K."/>
            <person name="Ishida Y."/>
            <person name="Sohda M."/>
            <person name="Oda K."/>
        </authorList>
    </citation>
    <scope>CHARACTERIZATION OF VARIANT HOPS LEU-108</scope>
    <scope>SUBCELLULAR LOCATION</scope>
    <scope>SUBUNIT</scope>
    <scope>FUNCTION</scope>
    <scope>CATALYTIC ACTIVITY</scope>
</reference>
<reference key="51">
    <citation type="journal article" date="2018" name="Clin. Pediatr. Endocrinol.">
        <title>A case of perinatal hypophosphatasia with a novel mutation in the ALPL gene: clinical course and review of the literature.</title>
        <authorList>
            <person name="Oyachi M."/>
            <person name="Harada D."/>
            <person name="Sakamoto N."/>
            <person name="Ueyama K."/>
            <person name="Kondo K."/>
            <person name="Kishimoto K."/>
            <person name="Izui M."/>
            <person name="Nagamatsu Y."/>
            <person name="Kashiwagi H."/>
            <person name="Yamamuro M."/>
            <person name="Tamura M."/>
            <person name="Kikuchi S."/>
            <person name="Akiyama T."/>
            <person name="Michigami T."/>
            <person name="Seino Y."/>
            <person name="Namba N."/>
        </authorList>
    </citation>
    <scope>VARIANT HOPS PRO-188</scope>
</reference>
<reference key="52">
    <citation type="journal article" date="2020" name="Clin. Case Rep.">
        <title>Identification of a novel homozygous variant in the alkaline phosphate (ALPL) gene associated with hypophosphatasia.</title>
        <authorList>
            <person name="Bisgin A."/>
            <person name="Boga I."/>
            <person name="Cetin C."/>
            <person name="Buyukkurt S."/>
        </authorList>
    </citation>
    <scope>VARIANT HOPS SER-218</scope>
</reference>
<reference key="53">
    <citation type="journal article" date="2021" name="J. Bone Miner. Metab.">
        <title>Novel mutation in the ALPL gene with a dominant negative effect in a Japanese family.</title>
        <authorList>
            <person name="Kato M."/>
            <person name="Michigami T."/>
            <person name="Tachikawa K."/>
            <person name="Kato M."/>
            <person name="Yabe I."/>
            <person name="Shimizu T."/>
            <person name="Asaka T."/>
            <person name="Kitagawa Y."/>
            <person name="Atsumi T."/>
        </authorList>
    </citation>
    <scope>VARIANT HOPS ARG-82</scope>
    <scope>CHARACTERIZATION OF VARIANT HOPS ARG-82</scope>
    <scope>CATALYTIC ACTIVITY</scope>
    <scope>SUBCELLULAR LOCATION</scope>
</reference>
<comment type="function">
    <text evidence="2 18 29 30 33 36 37">Alkaline phosphatase that metabolizes various phosphate compounds and plays a key role in skeletal mineralization and adaptive thermogenesis (PubMed:12162492, PubMed:23688511, PubMed:25982064). Has broad substrate specificity and can hydrolyze a considerable variety of compounds: however, only a few substrates, such as diphosphate (inorganic pyrophosphate; PPi), pyridoxal 5'-phosphate (PLP) and N-phosphocreatine are natural substrates (PubMed:12162492, PubMed:2220817). Plays an essential role in skeletal and dental mineralization via its ability to hydrolyze extracellular diphosphate, a potent mineralization inhibitor, to phosphate: it thereby promotes hydroxyapatite crystal formation and increases inorganic phosphate concentration (PubMed:23688511, PubMed:25982064). Acts in a non-redundant manner with PHOSPHO1 in skeletal mineralization: while PHOSPHO1 mediates the initiation of hydroxyapatite crystallization in the matrix vesicles (MVs), ALPL/TNAP catalyzes the spread of hydroxyapatite crystallization in the extracellular matrix (By similarity). Also promotes dephosphorylation of osteopontin (SSP1), an inhibitor of hydroxyapatite crystallization in its phosphorylated state; it is however unclear whether ALPL/TNAP mediates SSP1 dephosphorylation via a direct or indirect manner (By similarity). Catalyzes dephosphorylation of PLP to pyridoxal (PL), the transportable form of vitamin B6, in order to provide a sufficient amount of PLP in the brain, an essential cofactor for enzymes catalyzing the synthesis of diverse neurotransmitters (PubMed:20049532, PubMed:2220817). Additionally, also able to mediate ATP degradation in a stepwise manner to adenosine, thereby regulating the availability of ligands for purinergic receptors (By similarity). Also capable of dephosphorylating microbial products, such as lipopolysaccharides (LPS) as well as other phosphorylated small-molecules, such as poly-inosine:cytosine (poly I:C) (PubMed:28448526). Acts as a key regulator of adaptive thermogenesis as part of the futile creatine cycle: localizes to the mitochondria of thermogenic fat cells and acts by mediating hydrolysis of N-phosphocreatine to initiate a futile cycle of creatine dephosphorylation and phosphorylation (By similarity). During the futile creatine cycle, creatine and N-phosphocreatine are in a futile cycle, which dissipates the high energy charge of N-phosphocreatine as heat without performing any mechanical or chemical work (By similarity).</text>
</comment>
<comment type="catalytic activity">
    <reaction evidence="4 18 30 32 33 35 36 42">
        <text>a phosphate monoester + H2O = an alcohol + phosphate</text>
        <dbReference type="Rhea" id="RHEA:15017"/>
        <dbReference type="ChEBI" id="CHEBI:15377"/>
        <dbReference type="ChEBI" id="CHEBI:30879"/>
        <dbReference type="ChEBI" id="CHEBI:43474"/>
        <dbReference type="ChEBI" id="CHEBI:67140"/>
        <dbReference type="EC" id="3.1.3.1"/>
    </reaction>
    <physiologicalReaction direction="left-to-right" evidence="18 30 32 33 35 36 42">
        <dbReference type="Rhea" id="RHEA:15018"/>
    </physiologicalReaction>
</comment>
<comment type="catalytic activity">
    <reaction evidence="18">
        <text>diphosphate + H2O = 2 phosphate + H(+)</text>
        <dbReference type="Rhea" id="RHEA:24576"/>
        <dbReference type="ChEBI" id="CHEBI:15377"/>
        <dbReference type="ChEBI" id="CHEBI:15378"/>
        <dbReference type="ChEBI" id="CHEBI:33019"/>
        <dbReference type="ChEBI" id="CHEBI:43474"/>
    </reaction>
    <physiologicalReaction direction="left-to-right" evidence="18">
        <dbReference type="Rhea" id="RHEA:24577"/>
    </physiologicalReaction>
</comment>
<comment type="catalytic activity">
    <reaction evidence="18 30">
        <text>pyridoxal 5'-phosphate + H2O = pyridoxal + phosphate</text>
        <dbReference type="Rhea" id="RHEA:20533"/>
        <dbReference type="ChEBI" id="CHEBI:15377"/>
        <dbReference type="ChEBI" id="CHEBI:17310"/>
        <dbReference type="ChEBI" id="CHEBI:43474"/>
        <dbReference type="ChEBI" id="CHEBI:597326"/>
    </reaction>
    <physiologicalReaction direction="left-to-right" evidence="18 30">
        <dbReference type="Rhea" id="RHEA:20534"/>
    </physiologicalReaction>
</comment>
<comment type="catalytic activity">
    <reaction evidence="30">
        <text>phosphoethanolamine + H2O = ethanolamine + phosphate</text>
        <dbReference type="Rhea" id="RHEA:16089"/>
        <dbReference type="ChEBI" id="CHEBI:15377"/>
        <dbReference type="ChEBI" id="CHEBI:43474"/>
        <dbReference type="ChEBI" id="CHEBI:57603"/>
        <dbReference type="ChEBI" id="CHEBI:58190"/>
    </reaction>
    <physiologicalReaction direction="left-to-right" evidence="30">
        <dbReference type="Rhea" id="RHEA:16090"/>
    </physiologicalReaction>
</comment>
<comment type="catalytic activity">
    <reaction evidence="2">
        <text>N-phosphocreatine + H2O = creatine + phosphate</text>
        <dbReference type="Rhea" id="RHEA:12977"/>
        <dbReference type="ChEBI" id="CHEBI:15377"/>
        <dbReference type="ChEBI" id="CHEBI:43474"/>
        <dbReference type="ChEBI" id="CHEBI:57947"/>
        <dbReference type="ChEBI" id="CHEBI:58092"/>
        <dbReference type="EC" id="3.9.1.1"/>
    </reaction>
    <physiologicalReaction direction="left-to-right" evidence="2">
        <dbReference type="Rhea" id="RHEA:12978"/>
    </physiologicalReaction>
</comment>
<comment type="catalytic activity">
    <reaction evidence="2">
        <text>ATP + H2O = ADP + phosphate + H(+)</text>
        <dbReference type="Rhea" id="RHEA:13065"/>
        <dbReference type="ChEBI" id="CHEBI:15377"/>
        <dbReference type="ChEBI" id="CHEBI:15378"/>
        <dbReference type="ChEBI" id="CHEBI:30616"/>
        <dbReference type="ChEBI" id="CHEBI:43474"/>
        <dbReference type="ChEBI" id="CHEBI:456216"/>
    </reaction>
    <physiologicalReaction direction="left-to-right" evidence="2">
        <dbReference type="Rhea" id="RHEA:13066"/>
    </physiologicalReaction>
</comment>
<comment type="catalytic activity">
    <reaction evidence="2">
        <text>ADP + H2O = AMP + phosphate + H(+)</text>
        <dbReference type="Rhea" id="RHEA:61436"/>
        <dbReference type="ChEBI" id="CHEBI:15377"/>
        <dbReference type="ChEBI" id="CHEBI:15378"/>
        <dbReference type="ChEBI" id="CHEBI:43474"/>
        <dbReference type="ChEBI" id="CHEBI:456215"/>
        <dbReference type="ChEBI" id="CHEBI:456216"/>
    </reaction>
    <physiologicalReaction direction="left-to-right" evidence="2">
        <dbReference type="Rhea" id="RHEA:61437"/>
    </physiologicalReaction>
</comment>
<comment type="catalytic activity">
    <reaction evidence="2">
        <text>AMP + H2O = adenosine + phosphate</text>
        <dbReference type="Rhea" id="RHEA:29375"/>
        <dbReference type="ChEBI" id="CHEBI:15377"/>
        <dbReference type="ChEBI" id="CHEBI:16335"/>
        <dbReference type="ChEBI" id="CHEBI:43474"/>
        <dbReference type="ChEBI" id="CHEBI:456215"/>
    </reaction>
    <physiologicalReaction direction="left-to-right" evidence="2">
        <dbReference type="Rhea" id="RHEA:29376"/>
    </physiologicalReaction>
</comment>
<comment type="cofactor">
    <cofactor evidence="1">
        <name>Mg(2+)</name>
        <dbReference type="ChEBI" id="CHEBI:18420"/>
    </cofactor>
    <text evidence="1">Binds 1 Mg(2+) ion.</text>
</comment>
<comment type="cofactor">
    <cofactor evidence="35">
        <name>Zn(2+)</name>
        <dbReference type="ChEBI" id="CHEBI:29105"/>
    </cofactor>
    <text evidence="35">Binds 2 Zn(2+) ions.</text>
</comment>
<comment type="cofactor">
    <cofactor evidence="10 35">
        <name>Ca(2+)</name>
        <dbReference type="ChEBI" id="CHEBI:29108"/>
    </cofactor>
</comment>
<comment type="activity regulation">
    <text evidence="2">Phosphatase activity is specifically inhibited by 5-((5-chloro-2-methoxyphenyl)sulfonamido)nicotinamide (SBI-425).</text>
</comment>
<comment type="subunit">
    <text evidence="33 36">Homodimer.</text>
</comment>
<comment type="subcellular location">
    <subcellularLocation>
        <location evidence="30 33 36 42">Cell membrane</location>
        <topology evidence="33 36">Lipid-anchor</topology>
        <topology evidence="33 36">GPI-anchor</topology>
    </subcellularLocation>
    <subcellularLocation>
        <location evidence="2">Extracellular vesicle membrane</location>
        <topology evidence="2">Lipid-anchor</topology>
        <topology evidence="2">GPI-anchor</topology>
    </subcellularLocation>
    <subcellularLocation>
        <location evidence="2">Mitochondrion membrane</location>
        <topology evidence="2">Lipid-anchor</topology>
        <topology evidence="2">GPI-anchor</topology>
    </subcellularLocation>
    <subcellularLocation>
        <location evidence="2">Mitochondrion intermembrane space</location>
    </subcellularLocation>
    <text evidence="2">Localizes to special class of extracellular vesicles, named matrix vesicles (MVs), which are released by osteogenic cells. Localizes to the mitochondria of thermogenic fat cells: tethered to mitochondrial membranes via a GPI-anchor and probably resides in the mitochondrion intermembrane space.</text>
</comment>
<comment type="alternative products">
    <event type="alternative splicing"/>
    <isoform>
        <id>P05186-1</id>
        <name>1</name>
        <sequence type="displayed"/>
    </isoform>
    <isoform>
        <id>P05186-2</id>
        <name>2</name>
        <sequence type="described" ref="VSP_042711"/>
    </isoform>
    <isoform>
        <id>P05186-3</id>
        <name>3</name>
        <sequence type="described" ref="VSP_044228"/>
    </isoform>
</comment>
<comment type="domain">
    <text evidence="35">Calcium-binding is structural and does not influence the alkaline phosphatase activity (PubMed:25775211). At very high concentrations, calcium can however substitute for zinc at zinc-binding sites, leading to strongly reduced enzyme activity (PubMed:25775211).</text>
</comment>
<comment type="PTM">
    <text evidence="23 27">N-glycosylated.</text>
</comment>
<comment type="disease" evidence="5 6 7 8 9 10 11 12 13 14 15 16 17 18 19 20 21 22 24 26 28 29 31 32 33 34 36 39 40 41 42 44 45 46 47 48 49">
    <disease id="DI-01796">
        <name>Hypophosphatasia</name>
        <acronym>HOPS</acronym>
        <description>A metabolic bone disease characterized by defective skeletal mineralization and biochemically by deficient activity of the tissue non-specific isoenzyme of alkaline phosphatase. Four forms are distinguished, depending on the age of onset: perinatal, infantile, childhood and adult type. The perinatal form is the most severe and is almost always fatal. The adult form is mild and characterized by recurrent fractures, osteomalacia, rickets, and loss of teeth. Some cases are asymptomatic, while some patients manifest dental features without skeletal manifestations (odontohypophosphatasia).</description>
        <dbReference type="MIM" id="146300"/>
    </disease>
    <text>The disease is caused by variants affecting the gene represented in this entry.</text>
</comment>
<comment type="disease" evidence="14">
    <disease id="DI-03098">
        <name>Hypophosphatasia, childhood</name>
        <acronym>HPPC</acronym>
        <description>A bone disease characterized by defective skeletal mineralization and biochemically by deficient activity of the tissue non-specific isoenzyme of alkaline phosphatase.</description>
        <dbReference type="MIM" id="241510"/>
    </disease>
    <text>The disease is caused by variants affecting the gene represented in this entry.</text>
</comment>
<comment type="disease" evidence="9 11 18 44 46">
    <disease id="DI-03099">
        <name>Hypophosphatasia, infantile</name>
        <acronym>HPPI</acronym>
        <description>A severe bone disease characterized by defective skeletal mineralization and biochemically by deficient activity of the tissue non-specific isoenzyme of alkaline phosphatase. Three more or less distinct types of infantile hypophosphatasia can be identified: (1) type 1 with onset in utero or in early postnatal life, craniostenosis, severe skeletal abnormalities, hypercalcemia, and death in the first year or so of life; (2) type 2 with later, more gradual development of symptoms, moderately severe 'rachitic' skeletal changes and premature loss of teeth; (3) type 3 with no symptoms, the condition being determined on routine studies.</description>
        <dbReference type="MIM" id="241500"/>
    </disease>
    <text>The disease is caused by variants affecting the gene represented in this entry.</text>
</comment>
<comment type="miscellaneous">
    <text evidence="55">In most mammals there are four different isozymes: placental (ALPP), germ cell (ALPG), intestinal (ALPI) and tissue non-specific (liver/bone/kidney) (ALPL/TNAP).</text>
</comment>
<comment type="similarity">
    <text evidence="55">Belongs to the alkaline phosphatase family.</text>
</comment>
<comment type="sequence caution" evidence="55">
    <conflict type="erroneous initiation">
        <sequence resource="EMBL-CDS" id="BAD93051"/>
    </conflict>
    <text>Extended N-terminus.</text>
</comment>
<comment type="online information" name="ALPL">
    <link uri="http://wp.hypophosphatasie.com/accueil/"/>
    <text>Tissue nonspecific alkaline phosphatase gene mutations database</text>
</comment>
<comment type="online information" name="Wikipedia">
    <link uri="https://en.wikipedia.org/wiki/Alkaline_phosphatase"/>
    <text>Alkaline phosphatase entry</text>
</comment>
<comment type="online information" name="Protein Spotlight">
    <link uri="https://www.proteinspotlight.org/back_issues/242/"/>
    <text>Constructive futility - Issue 242 of December 2021</text>
</comment>
<sequence>MISPFLVLAIGTCLTNSLVPEKEKDPKYWRDQAQETLKYALELQKLNTNVAKNVIMFLGDGMGVSTVTAARILKGQLHHNPGEETRLEMDKFPFVALSKTYNTNAQVPDSAGTATAYLCGVKANEGTVGVSAATERSRCNTTQGNEVTSILRWAKDAGKSVGIVTTTRVNHATPSAAYAHSADRDWYSDNEMPPEALSQGCKDIAYQLMHNIRDIDVIMGGGRKYMYPKNKTDVEYESDEKARGTRLDGLDLVDTWKSFKPRYKHSHFIWNRTELLTLDPHNVDYLLGLFEPGDMQYELNRNNVTDPSLSEMVVVAIQILRKNPKGFFLLVEGGRIDHGHHEGKAKQALHEAVEMDRAIGQAGSLTSSEDTLTVVTADHSHVFTFGGYTPRGNSIFGLAPMLSDTDKKPFTAILYGNGPGYKVVGGERENVSMVDYAHNNYQAQSAVPLRHETHGGEDVAVFSKGPMAHLLHGVHEQNYVPHVMAYAACIGANLGHCAPASSAGSLAAGPLLLALALYPLSVLF</sequence>
<feature type="signal peptide" evidence="23 43">
    <location>
        <begin position="1"/>
        <end position="17"/>
    </location>
</feature>
<feature type="chain" id="PRO_0000024023" description="Alkaline phosphatase, tissue-nonspecific isozyme">
    <location>
        <begin position="18"/>
        <end position="501"/>
    </location>
</feature>
<feature type="propeptide" id="PRO_0000024024" description="Removed in mature form" evidence="55">
    <location>
        <begin position="502"/>
        <end position="524"/>
    </location>
</feature>
<feature type="active site" description="Phosphoserine intermediate" evidence="1 4">
    <location>
        <position position="110"/>
    </location>
</feature>
<feature type="binding site" evidence="1">
    <location>
        <position position="60"/>
    </location>
    <ligand>
        <name>Mg(2+)</name>
        <dbReference type="ChEBI" id="CHEBI:18420"/>
    </ligand>
</feature>
<feature type="binding site" evidence="1">
    <location>
        <position position="60"/>
    </location>
    <ligand>
        <name>Zn(2+)</name>
        <dbReference type="ChEBI" id="CHEBI:29105"/>
        <label>1</label>
    </ligand>
</feature>
<feature type="binding site" evidence="1">
    <location>
        <position position="110"/>
    </location>
    <ligand>
        <name>Zn(2+)</name>
        <dbReference type="ChEBI" id="CHEBI:29105"/>
        <label>1</label>
    </ligand>
</feature>
<feature type="binding site" evidence="1">
    <location>
        <position position="173"/>
    </location>
    <ligand>
        <name>Mg(2+)</name>
        <dbReference type="ChEBI" id="CHEBI:18420"/>
    </ligand>
</feature>
<feature type="binding site" evidence="10">
    <location>
        <position position="235"/>
    </location>
    <ligand>
        <name>Ca(2+)</name>
        <dbReference type="ChEBI" id="CHEBI:29108"/>
    </ligand>
</feature>
<feature type="binding site" evidence="10">
    <location>
        <position position="290"/>
    </location>
    <ligand>
        <name>Ca(2+)</name>
        <dbReference type="ChEBI" id="CHEBI:29108"/>
    </ligand>
</feature>
<feature type="binding site" evidence="10">
    <location>
        <position position="291"/>
    </location>
    <ligand>
        <name>Ca(2+)</name>
        <dbReference type="ChEBI" id="CHEBI:29108"/>
    </ligand>
</feature>
<feature type="binding site" evidence="10">
    <location>
        <position position="306"/>
    </location>
    <ligand>
        <name>Ca(2+)</name>
        <dbReference type="ChEBI" id="CHEBI:29108"/>
    </ligand>
</feature>
<feature type="binding site" evidence="1">
    <location>
        <position position="332"/>
    </location>
    <ligand>
        <name>Mg(2+)</name>
        <dbReference type="ChEBI" id="CHEBI:18420"/>
    </ligand>
</feature>
<feature type="binding site" evidence="1">
    <location>
        <position position="337"/>
    </location>
    <ligand>
        <name>Zn(2+)</name>
        <dbReference type="ChEBI" id="CHEBI:29105"/>
        <label>2</label>
    </ligand>
</feature>
<feature type="binding site" evidence="1">
    <location>
        <position position="341"/>
    </location>
    <ligand>
        <name>Zn(2+)</name>
        <dbReference type="ChEBI" id="CHEBI:29105"/>
        <label>2</label>
    </ligand>
</feature>
<feature type="binding site" evidence="1">
    <location>
        <position position="378"/>
    </location>
    <ligand>
        <name>Zn(2+)</name>
        <dbReference type="ChEBI" id="CHEBI:29105"/>
        <label>1</label>
    </ligand>
</feature>
<feature type="binding site" evidence="1">
    <location>
        <position position="379"/>
    </location>
    <ligand>
        <name>Zn(2+)</name>
        <dbReference type="ChEBI" id="CHEBI:29105"/>
        <label>1</label>
    </ligand>
</feature>
<feature type="binding site" evidence="1">
    <location>
        <position position="454"/>
    </location>
    <ligand>
        <name>Zn(2+)</name>
        <dbReference type="ChEBI" id="CHEBI:29105"/>
        <label>2</label>
    </ligand>
</feature>
<feature type="modified residue" description="Phosphoserine" evidence="2">
    <location>
        <position position="110"/>
    </location>
</feature>
<feature type="lipid moiety-binding region" description="GPI-anchor amidated serine" evidence="3">
    <location>
        <position position="501"/>
    </location>
</feature>
<feature type="glycosylation site" description="N-linked (GlcNAc...) asparagine" evidence="3">
    <location>
        <position position="140"/>
    </location>
</feature>
<feature type="glycosylation site" description="N-linked (GlcNAc...) asparagine" evidence="3">
    <location>
        <position position="230"/>
    </location>
</feature>
<feature type="glycosylation site" description="N-linked (GlcNAc...) asparagine" evidence="3">
    <location>
        <position position="271"/>
    </location>
</feature>
<feature type="glycosylation site" description="N-linked (GlcNAc...) asparagine" evidence="3">
    <location>
        <position position="303"/>
    </location>
</feature>
<feature type="glycosylation site" description="N-linked (GlcNAc...) asparagine" evidence="27">
    <location>
        <position position="430"/>
    </location>
</feature>
<feature type="disulfide bond" evidence="1">
    <location>
        <begin position="139"/>
        <end position="201"/>
    </location>
</feature>
<feature type="disulfide bond" evidence="1">
    <location>
        <begin position="489"/>
        <end position="497"/>
    </location>
</feature>
<feature type="splice variant" id="VSP_042711" description="In isoform 2." evidence="51">
    <original>MISPFLVLAIGTCLTNSLVPEKEKDPKYWRDQAQETLKYALELQKLNTNVAKNVIMFLGDGMGVSTVTAARILKGQLHHNPGEETRLEMDKFPFVALSK</original>
    <variation>MPWSFRSSTPTWLRMSSCSWEM</variation>
    <location>
        <begin position="1"/>
        <end position="99"/>
    </location>
</feature>
<feature type="splice variant" id="VSP_044228" description="In isoform 3." evidence="51">
    <location>
        <begin position="1"/>
        <end position="55"/>
    </location>
</feature>
<feature type="sequence variant" id="VAR_025903" description="In HOPS." evidence="49">
    <original>S</original>
    <variation>F</variation>
    <location>
        <position position="17"/>
    </location>
</feature>
<feature type="sequence variant" id="VAR_013972" description="In HPPI; 7% of activity." evidence="11">
    <original>Y</original>
    <variation>C</variation>
    <location>
        <position position="28"/>
    </location>
</feature>
<feature type="sequence variant" id="VAR_006147" description="In HOPS; strongly reduced alkaline phosphatase activity; dbSNP:rs121918005." evidence="18 22 26">
    <original>A</original>
    <variation>V</variation>
    <location>
        <position position="33"/>
    </location>
</feature>
<feature type="sequence variant" id="VAR_011081" description="In HOPS; 2% of activity; dbSNP:rs770093969." evidence="6 7 11 12 49">
    <original>A</original>
    <variation>V</variation>
    <location>
        <position position="40"/>
    </location>
</feature>
<feature type="sequence variant" id="VAR_025904" description="In HOPS." evidence="16">
    <original>A</original>
    <variation>S</variation>
    <location>
        <position position="51"/>
    </location>
</feature>
<feature type="sequence variant" id="VAR_013973" description="In HOPS; dbSNP:rs1470389268." evidence="11">
    <original>A</original>
    <variation>V</variation>
    <location>
        <position position="51"/>
    </location>
</feature>
<feature type="sequence variant" id="VAR_006148" description="In HOPS; moderate; 27% of activity." evidence="5 6">
    <original>M</original>
    <variation>L</variation>
    <location>
        <position position="62"/>
    </location>
</feature>
<feature type="sequence variant" id="VAR_025905" description="In HOPS." evidence="20">
    <original>M</original>
    <variation>V</variation>
    <location>
        <position position="62"/>
    </location>
</feature>
<feature type="sequence variant" id="VAR_025906" description="In HOPS." evidence="20">
    <original>G</original>
    <variation>R</variation>
    <location>
        <position position="63"/>
    </location>
</feature>
<feature type="sequence variant" id="VAR_013974" description="In HOPS; loss of activity." evidence="12">
    <original>G</original>
    <variation>V</variation>
    <location>
        <position position="63"/>
    </location>
</feature>
<feature type="sequence variant" id="VAR_025907" description="In HPPC; severe allele." evidence="14">
    <original>T</original>
    <variation>M</variation>
    <location>
        <position position="68"/>
    </location>
</feature>
<feature type="sequence variant" id="VAR_006149" description="In HOPS; abolished alkaline phosphatase activity; dbSNP:rs121918001." evidence="18 22 28">
    <original>R</original>
    <variation>C</variation>
    <location>
        <position position="71"/>
    </location>
</feature>
<feature type="sequence variant" id="VAR_013975" description="In HOPS; loss of alkaline phosphatase activity; dbSNP:rs121918003." evidence="11 16 28">
    <original>R</original>
    <variation>H</variation>
    <location>
        <position position="71"/>
    </location>
</feature>
<feature type="sequence variant" id="VAR_006150" description="In HOPS; abolished alkaline phosphatase activity; dbSNP:rs121918003." evidence="18 22">
    <original>R</original>
    <variation>P</variation>
    <location>
        <position position="71"/>
    </location>
</feature>
<feature type="sequence variant" id="VAR_025908" description="In HPPC; severe allele; dbSNP:rs121918001." evidence="14">
    <original>R</original>
    <variation>S</variation>
    <location>
        <position position="71"/>
    </location>
</feature>
<feature type="sequence variant" id="VAR_013976" description="In HOPS; severe; 3.5% of activity; dbSNP:rs1304394441." evidence="6 49">
    <original>G</original>
    <variation>S</variation>
    <location>
        <position position="75"/>
    </location>
</feature>
<feature type="sequence variant" id="VAR_025909" description="In HOPS; dbSNP:rs1057521085." evidence="10">
    <original>Q</original>
    <variation>R</variation>
    <location>
        <position position="76"/>
    </location>
</feature>
<feature type="sequence variant" id="VAR_085155" description="In HOPS; dominant-negative mutant; abolished alkaline phosphatase activity." evidence="42">
    <original>G</original>
    <variation>R</variation>
    <location>
        <position position="82"/>
    </location>
</feature>
<feature type="sequence variant" id="VAR_025910" description="In HOPS; 0.4% of alkaline phosphatase activity; severe allele; no effect on subcellular location; fails to assemble into dimeric structure; dominant negative effect; dbSNP:rs121918015." evidence="21 36">
    <original>P</original>
    <variation>L</variation>
    <location>
        <position position="108"/>
    </location>
</feature>
<feature type="sequence variant" id="VAR_006151" description="In HOPS; odonto; abolished alkaline phosphatase activity; dbSNP:rs773257111." evidence="6 7 16 18 20 28 47">
    <original>A</original>
    <variation>T</variation>
    <location>
        <position position="111"/>
    </location>
</feature>
<feature type="sequence variant" id="VAR_025911" description="In HOPS." evidence="24">
    <original>A</original>
    <variation>G</variation>
    <location>
        <position position="114"/>
    </location>
</feature>
<feature type="sequence variant" id="VAR_013977" description="In HOPS; loss of alkaline phosphatase activity; dbSNP:rs121918013." evidence="11 12 21 36">
    <original>A</original>
    <variation>T</variation>
    <location>
        <position position="116"/>
    </location>
</feature>
<feature type="sequence variant" id="VAR_013978" description="In HOPS; dbSNP:rs954135116." evidence="6 49">
    <original>G</original>
    <variation>R</variation>
    <location>
        <position position="120"/>
    </location>
</feature>
<feature type="sequence variant" id="VAR_025912" description="In HOPS; dbSNP:rs1159854007." evidence="16">
    <original>V</original>
    <variation>M</variation>
    <location>
        <position position="128"/>
    </location>
</feature>
<feature type="sequence variant" id="VAR_013979" description="In HOPS." evidence="6 49">
    <original>G</original>
    <variation>R</variation>
    <location>
        <position position="129"/>
    </location>
</feature>
<feature type="sequence variant" id="VAR_013146" description="In HOPS; strongly reduced alkaline phosphatase activity." evidence="15 18">
    <original>A</original>
    <variation>V</variation>
    <location>
        <position position="132"/>
    </location>
</feature>
<feature type="sequence variant" id="VAR_025913" description="In HOPS; requires 2 nucleotide substitutions; dbSNP:rs786204530." evidence="16">
    <original>T</original>
    <variation>H</variation>
    <location>
        <position position="134"/>
    </location>
</feature>
<feature type="sequence variant" id="VAR_011082" description="In HOPS; 9% of activity; dbSNP:rs780583917." evidence="7">
    <original>T</original>
    <variation>N</variation>
    <location>
        <position position="134"/>
    </location>
</feature>
<feature type="sequence variant" id="VAR_006152" description="In HOPS; moderate; 33% of activity; dbSNP:rs121918011." evidence="5 6 11 16 26">
    <original>R</original>
    <variation>H</variation>
    <location>
        <position position="136"/>
    </location>
</feature>
<feature type="sequence variant" id="VAR_025914" description="In HOPS; dbSNP:rs1376937780." evidence="20">
    <original>T</original>
    <variation>I</variation>
    <location>
        <position position="148"/>
    </location>
</feature>
<feature type="sequence variant" id="VAR_085156" description="In HOPS; uncertain significance." evidence="34">
    <original>R</original>
    <variation>C</variation>
    <location>
        <position position="152"/>
    </location>
</feature>
<feature type="sequence variant" id="VAR_013980" description="In HOPS; benign; lethal form; dbSNP:rs149344982." evidence="11 50">
    <original>R</original>
    <variation>H</variation>
    <location>
        <position position="152"/>
    </location>
</feature>
<feature type="sequence variant" id="VAR_025915" description="In HOPS; dbSNP:rs760029254." evidence="20">
    <original>G</original>
    <variation>S</variation>
    <location>
        <position position="162"/>
    </location>
</feature>
<feature type="sequence variant" id="VAR_006153" description="In HOPS; severe; 1% of activity; dbSNP:rs121918012." evidence="5 6">
    <original>G</original>
    <variation>V</variation>
    <location>
        <position position="162"/>
    </location>
</feature>
<feature type="sequence variant" id="VAR_013981" description="In HOPS." evidence="6 49">
    <original>N</original>
    <variation>D</variation>
    <location>
        <position position="170"/>
    </location>
</feature>
<feature type="sequence variant" id="VAR_025916" description="In HOPS; dbSNP:rs778232217." evidence="10">
    <original>H</original>
    <variation>R</variation>
    <location>
        <position position="171"/>
    </location>
</feature>
<feature type="sequence variant" id="VAR_006154" description="In HOPS; severe; 2% of activity." evidence="5 6">
    <original>H</original>
    <variation>Y</variation>
    <location>
        <position position="171"/>
    </location>
</feature>
<feature type="sequence variant" id="VAR_011083" description="In HOPS; 30% of alkaline phosphatase activity; dbSNP:rs121918019." evidence="7 11 16 28">
    <original>A</original>
    <variation>T</variation>
    <location>
        <position position="176"/>
    </location>
</feature>
<feature type="sequence variant" id="VAR_006155" description="In HOPS and HPPC; moderate allele; normal alkaline phosphatase activity toward diphosphate and increased activity toward pyridoxal 5'-phosphate; dbSNP:rs199669988." evidence="14 18 47">
    <original>A</original>
    <variation>T</variation>
    <location>
        <position position="177"/>
    </location>
</feature>
<feature type="sequence variant" id="VAR_006156" description="In HOPS; reduced alkaline phosphatase activity toward diphosphate and pyridoxal 5'-phosphate; dbSNP:rs121918000." evidence="11 18 40">
    <original>A</original>
    <variation>T</variation>
    <location>
        <position position="179"/>
    </location>
</feature>
<feature type="sequence variant" id="VAR_013982" description="In HOPS; 1% of activity; dbSNP:rs199590449." evidence="12">
    <original>S</original>
    <variation>L</variation>
    <location>
        <position position="181"/>
    </location>
</feature>
<feature type="sequence variant" id="VAR_013983" description="In HOPS; loss of activity; dbSNP:rs763159520." evidence="6 12 49">
    <original>R</original>
    <variation>W</variation>
    <location>
        <position position="184"/>
    </location>
</feature>
<feature type="sequence variant" id="VAR_085157" description="In HOPS; uncertain significance." evidence="39">
    <original>S</original>
    <variation>P</variation>
    <location>
        <position position="188"/>
    </location>
</feature>
<feature type="sequence variant" id="VAR_025917" description="In HOPS." evidence="20">
    <original>D</original>
    <variation>E</variation>
    <location>
        <position position="189"/>
    </location>
</feature>
<feature type="sequence variant" id="VAR_006157" description="In HOPS; odonto; slightly reduced alkaline phosphatase activity." evidence="18 47">
    <original>E</original>
    <variation>G</variation>
    <location>
        <position position="191"/>
    </location>
</feature>
<feature type="sequence variant" id="VAR_006158" description="In HOPS; moderate; frequent mutation in European countries; slightly reduced alkaline phosphatase activity; dbSNP:rs121918007." evidence="5 6 7 11 16 18 22 28 49">
    <original>E</original>
    <variation>K</variation>
    <location>
        <position position="191"/>
    </location>
</feature>
<feature type="sequence variant" id="VAR_006159" description="In HOPS; weak alkaline phosphatase activity; severely affects homodimerization; reduced cell surface expression." evidence="5 7 31">
    <original>C</original>
    <variation>Y</variation>
    <location>
        <position position="201"/>
    </location>
</feature>
<feature type="sequence variant" id="VAR_006160" description="In HOPS; dbSNP:rs121918004." evidence="22">
    <original>Q</original>
    <variation>P</variation>
    <location>
        <position position="207"/>
    </location>
</feature>
<feature type="sequence variant" id="VAR_013984" description="In HOPS." evidence="11">
    <original>N</original>
    <variation>D</variation>
    <location>
        <position position="211"/>
    </location>
</feature>
<feature type="sequence variant" id="VAR_025918" description="In HOPS." evidence="19">
    <original>I</original>
    <variation>F</variation>
    <location>
        <position position="212"/>
    </location>
</feature>
<feature type="sequence variant" id="VAR_085158" description="In HOPS; uncertain significance." evidence="41">
    <original>I</original>
    <variation>S</variation>
    <location>
        <position position="218"/>
    </location>
</feature>
<feature type="sequence variant" id="VAR_025919" description="In HOPS." evidence="20">
    <original>G</original>
    <variation>A</variation>
    <location>
        <position position="220"/>
    </location>
</feature>
<feature type="sequence variant" id="VAR_013985" description="In HOPS; odonto." evidence="11">
    <original>G</original>
    <variation>V</variation>
    <location>
        <position position="220"/>
    </location>
</feature>
<feature type="sequence variant" id="VAR_025920" description="In HOPS; dbSNP:rs199665722." evidence="16 26">
    <original>R</original>
    <variation>Q</variation>
    <location>
        <position position="223"/>
    </location>
</feature>
<feature type="sequence variant" id="VAR_013986" description="In HOPS and HPPC; severe allele; abolished alkaline phosphatase activity; dbSNP:rs766076920." evidence="6 12 14 16 18 26 49">
    <original>R</original>
    <variation>W</variation>
    <location>
        <position position="223"/>
    </location>
</feature>
<feature type="sequence variant" id="VAR_011084" description="In HPPI; partial loss of activity; dbSNP:rs1226800998." evidence="9">
    <original>K</original>
    <variation>E</variation>
    <location>
        <position position="224"/>
    </location>
</feature>
<feature type="sequence variant" id="VAR_013987" description="In HOPS." evidence="11">
    <original>E</original>
    <variation>G</variation>
    <location>
        <position position="235"/>
    </location>
</feature>
<feature type="sequence variant" id="VAR_011085" description="In HOPS; 4% of activity; dbSNP:rs1223142821." evidence="7 16">
    <original>R</original>
    <variation>S</variation>
    <location>
        <position position="246"/>
    </location>
</feature>
<feature type="sequence variant" id="VAR_013988" description="In HOPS; partial loss of activity; dbSNP:rs121918018." evidence="5 6 12">
    <original>G</original>
    <variation>V</variation>
    <location>
        <position position="249"/>
    </location>
</feature>
<feature type="sequence variant" id="VAR_006161" description="In dbSNP:rs3200254." evidence="16 22 25 38 49">
    <original>Y</original>
    <variation>H</variation>
    <location>
        <position position="263"/>
    </location>
</feature>
<feature type="sequence variant" id="VAR_025921" description="In HOPS; 6.8% of wild-type activity; dbSNP:rs781272386." evidence="26">
    <original>R</original>
    <variation>H</variation>
    <location>
        <position position="272"/>
    </location>
</feature>
<feature type="sequence variant" id="VAR_025922" description="In HOPS; dbSNP:rs781272386." evidence="20">
    <original>R</original>
    <variation>L</variation>
    <location>
        <position position="272"/>
    </location>
</feature>
<feature type="sequence variant" id="VAR_025923" description="In HPPC; severe allele; dbSNP:rs1237252052." evidence="14">
    <original>L</original>
    <variation>P</variation>
    <location>
        <position position="275"/>
    </location>
</feature>
<feature type="sequence variant" id="VAR_006162" description="In HOPS." evidence="48">
    <original>L</original>
    <variation>F</variation>
    <location>
        <position position="289"/>
    </location>
</feature>
<feature type="sequence variant" id="VAR_013989" description="In HOPS; moderate; 8% of activity; dbSNP:rs786204473." evidence="6 17 49">
    <original>E</original>
    <variation>K</variation>
    <location>
        <position position="291"/>
    </location>
</feature>
<feature type="sequence variant" id="VAR_025924" description="In HOPS; 4% of wild-type activity; dbSNP:rs765458125." evidence="26">
    <original>P</original>
    <variation>T</variation>
    <location>
        <position position="292"/>
    </location>
</feature>
<feature type="sequence variant" id="VAR_025925" description="In HOPS.">
    <location>
        <begin position="293"/>
        <end position="294"/>
    </location>
</feature>
<feature type="sequence variant" id="VAR_006163" description="In HOPS; reduced alkaline phosphatase toward diphosphate and pyridoxal 5'-phosphate; dbSNP:rs121918002." evidence="16 18 22 26">
    <original>D</original>
    <variation>A</variation>
    <location>
        <position position="294"/>
    </location>
</feature>
<feature type="sequence variant" id="VAR_013990" description="In HOPS; dbSNP:rs1553414079." evidence="11">
    <original>D</original>
    <variation>Y</variation>
    <location>
        <position position="294"/>
    </location>
</feature>
<feature type="sequence variant" id="VAR_025926" description="In HOPS; 8.5% of wild-type activity; dbSNP:rs1220125702." evidence="26">
    <original>M</original>
    <variation>T</variation>
    <location>
        <position position="295"/>
    </location>
</feature>
<feature type="sequence variant" id="VAR_025927" description="In HOPS; 1.3% of wild-type activity." evidence="26">
    <original>Y</original>
    <variation>D</variation>
    <location>
        <position position="297"/>
    </location>
</feature>
<feature type="sequence variant" id="VAR_025928" description="In HPPI; does not affect alkaline phosphatase activity; dbSNP:rs121918017." evidence="18 44">
    <original>E</original>
    <variation>K</variation>
    <location>
        <position position="298"/>
    </location>
</feature>
<feature type="sequence variant" id="VAR_025929" description="In HOPS." evidence="16">
    <original>L</original>
    <variation>P</variation>
    <location>
        <position position="299"/>
    </location>
</feature>
<feature type="sequence variant" id="VAR_006164" description="In HOPS." evidence="5 6">
    <original>D</original>
    <variation>V</variation>
    <location>
        <position position="306"/>
    </location>
</feature>
<feature type="sequence variant" id="VAR_025930" description="In HOPS; dbSNP:rs763457259." evidence="20">
    <original>E</original>
    <variation>K</variation>
    <location>
        <position position="311"/>
    </location>
</feature>
<feature type="sequence variant" id="VAR_013991" description="In HOPS; in a patient carrying also K-291." evidence="17">
    <original>G</original>
    <variation>R</variation>
    <location>
        <position position="326"/>
    </location>
</feature>
<feature type="sequence variant" id="VAR_013992" description="In HOPS; requires 2 nucleotide substitutions." evidence="11">
    <original>F</original>
    <variation>G</variation>
    <location>
        <position position="327"/>
    </location>
</feature>
<feature type="sequence variant" id="VAR_006165" description="In HOPS and HPPI; dbSNP:rs121918010." evidence="46 47">
    <original>F</original>
    <variation>L</variation>
    <location>
        <position position="327"/>
    </location>
</feature>
<feature type="sequence variant" id="VAR_025931" description="In HOPS." evidence="16">
    <location>
        <position position="327"/>
    </location>
</feature>
<feature type="sequence variant" id="VAR_006166" description="In HOPS; abolished alkaline phosphatase activity; dbSNP:rs121918009." evidence="6 18 26 28 45 49">
    <original>G</original>
    <variation>D</variation>
    <location>
        <position position="334"/>
    </location>
</feature>
<feature type="sequence variant" id="VAR_075557" description="In HOPS; weak alkaline phosphatase activity." evidence="28">
    <original>G</original>
    <variation>R</variation>
    <location>
        <position position="334"/>
    </location>
</feature>
<feature type="sequence variant" id="VAR_025932" description="In HOPS; loss of alkaline phosphatase activity." evidence="16 28">
    <original>G</original>
    <variation>R</variation>
    <location>
        <position position="339"/>
    </location>
</feature>
<feature type="sequence variant" id="VAR_011086" description="In HOPS; dbSNP:rs1553414563." evidence="7 16">
    <original>A</original>
    <variation>T</variation>
    <location>
        <position position="348"/>
    </location>
</feature>
<feature type="sequence variant" id="VAR_025933" description="In HOPS; dbSNP:rs1553414568." evidence="19">
    <original>E</original>
    <variation>D</variation>
    <location>
        <position position="354"/>
    </location>
</feature>
<feature type="sequence variant" id="VAR_006167" description="In HOPS; strongly reduced alkaline phosphatase activity; dbSNP:rs121918008." evidence="8 12 16 18 22">
    <original>D</original>
    <variation>V</variation>
    <location>
        <position position="378"/>
    </location>
</feature>
<feature type="sequence variant" id="VAR_011087" description="In HOPS." evidence="7">
    <original>H</original>
    <variation>R</variation>
    <location>
        <position position="381"/>
    </location>
</feature>
<feature type="sequence variant" id="VAR_006168" description="In HOPS; abolished alkaline phosphatase activity; dbSNP:rs771540767." evidence="18 28 47">
    <original>V</original>
    <variation>I</variation>
    <location>
        <position position="382"/>
    </location>
</feature>
<feature type="sequence variant" id="VAR_013993" description="In HOPS; moderate; 4-10% of alkaline phosphatase activity; dbSNP:rs371243939." evidence="6 28">
    <original>R</original>
    <variation>C</variation>
    <location>
        <position position="391"/>
    </location>
</feature>
<feature type="sequence variant" id="VAR_025934" description="In HPPC and HOPS; severe allele; loss of alkaline phosphatase activity; dbSNP:rs1442918125." evidence="14 28">
    <original>R</original>
    <variation>H</variation>
    <location>
        <position position="391"/>
    </location>
</feature>
<feature type="sequence variant" id="VAR_013994" description="In HOPS." evidence="11">
    <original>A</original>
    <variation>S</variation>
    <location>
        <position position="399"/>
    </location>
</feature>
<feature type="sequence variant" id="VAR_011088" description="In HOPS; 15% of activity." evidence="7">
    <original>D</original>
    <variation>G</variation>
    <location>
        <position position="406"/>
    </location>
</feature>
<feature type="sequence variant" id="VAR_025935" description="In HOPS; absence of residual enzymatic activity." evidence="26">
    <original>T</original>
    <variation>A</variation>
    <location>
        <position position="411"/>
    </location>
</feature>
<feature type="sequence variant" id="VAR_025936" description="In HOPS; loss of alkaline phosphatase activity." evidence="16 21 28">
    <original>L</original>
    <variation>M</variation>
    <location>
        <position position="414"/>
    </location>
</feature>
<feature type="sequence variant" id="VAR_025937" description="In HOPS; very low alkaline phosphatase activity; does not affect subcellular location; fails to assemble into dimeric structure; dbSNP:rs121918014." evidence="13 33">
    <original>N</original>
    <variation>S</variation>
    <location>
        <position position="417"/>
    </location>
</feature>
<feature type="sequence variant" id="VAR_075558" description="In HOPS; very low alkaline phosphatase activity; does not affect subcellular location." evidence="28 32">
    <original>G</original>
    <variation>A</variation>
    <location>
        <position position="420"/>
    </location>
</feature>
<feature type="sequence variant" id="VAR_075559" description="In HOPS; very low alkaline phosphatase activity; does not affect subcellular location." evidence="32">
    <original>G</original>
    <variation>S</variation>
    <location>
        <position position="420"/>
    </location>
</feature>
<feature type="sequence variant" id="VAR_013995" description="In HOPS; 16% alkaline of phosphatase activity." evidence="11 32">
    <original>V</original>
    <variation>A</variation>
    <location>
        <position position="423"/>
    </location>
</feature>
<feature type="sequence variant" id="VAR_011089" description="In HPPI; partial loss of activity." evidence="9">
    <original>G</original>
    <variation>C</variation>
    <location>
        <position position="426"/>
    </location>
</feature>
<feature type="sequence variant" id="VAR_025938" description="In HOPS." evidence="16">
    <original>G</original>
    <variation>D</variation>
    <location>
        <position position="426"/>
    </location>
</feature>
<feature type="sequence variant" id="VAR_006169" description="In HOPS; dbSNP:rs121918006." evidence="22">
    <original>Y</original>
    <variation>H</variation>
    <location>
        <position position="436"/>
    </location>
</feature>
<feature type="sequence variant" id="VAR_085159" description="In HOPS; uncertain significance." evidence="34">
    <location>
        <position position="440"/>
    </location>
</feature>
<feature type="sequence variant" id="VAR_013996" description="In HOPS; severe; 2% of activity; dbSNP:rs1553415041." evidence="6 49">
    <original>S</original>
    <variation>P</variation>
    <location>
        <position position="445"/>
    </location>
</feature>
<feature type="sequence variant" id="VAR_013997" description="In HOPS; severe; 4% of activity; dbSNP:rs138690664." evidence="6 49">
    <original>R</original>
    <variation>C</variation>
    <location>
        <position position="450"/>
    </location>
</feature>
<feature type="sequence variant" id="VAR_011090" description="In HOPS; dbSNP:rs150799088." evidence="7">
    <original>R</original>
    <variation>H</variation>
    <location>
        <position position="450"/>
    </location>
</feature>
<feature type="sequence variant" id="VAR_025939" description="In HOPS; loss of alkaline phosphatase activity; dbSNP:rs966212736." evidence="20 28">
    <original>E</original>
    <variation>K</variation>
    <location>
        <position position="452"/>
    </location>
</feature>
<feature type="sequence variant" id="VAR_011091" description="In HPPI and HOPS; strongly reduced alkaline phosphatase activity; dbSNP:rs121918016." evidence="18 46">
    <original>G</original>
    <variation>R</variation>
    <location>
        <position position="456"/>
    </location>
</feature>
<feature type="sequence variant" id="VAR_075560" description="In HOPS; loss of alkaline phosphatase activity." evidence="28">
    <original>V</original>
    <variation>L</variation>
    <location>
        <position position="459"/>
    </location>
</feature>
<feature type="sequence variant" id="VAR_013998" description="In HPPI; dbSNP:rs1054159992." evidence="11">
    <original>V</original>
    <variation>M</variation>
    <location>
        <position position="459"/>
    </location>
</feature>
<feature type="sequence variant" id="VAR_025940" description="In HOPS; dbSNP:rs1196976671." evidence="20">
    <original>A</original>
    <variation>T</variation>
    <location>
        <position position="468"/>
    </location>
</feature>
<feature type="sequence variant" id="VAR_013999" description="In HOPS." evidence="6 49">
    <original>G</original>
    <variation>S</variation>
    <location>
        <position position="473"/>
    </location>
</feature>
<feature type="sequence variant" id="VAR_075561" description="In HOPS; loss of alkaline phosphatase activity." evidence="28">
    <original>E</original>
    <variation>A</variation>
    <location>
        <position position="476"/>
    </location>
</feature>
<feature type="sequence variant" id="VAR_006170" description="In HOPS." evidence="5 6 16">
    <original>E</original>
    <variation>K</variation>
    <location>
        <position position="476"/>
    </location>
</feature>
<feature type="sequence variant" id="VAR_011092" description="In HOPS; 9% of activity." evidence="7 12">
    <original>N</original>
    <variation>I</variation>
    <location>
        <position position="478"/>
    </location>
</feature>
<feature type="sequence variant" id="VAR_011093" description="In HOPS; reduces alkaline phosphatase activity." evidence="7 31">
    <original>C</original>
    <variation>S</variation>
    <location>
        <position position="489"/>
    </location>
</feature>
<feature type="sequence variant" id="VAR_014000" description="In HOPS; odonto; partial loss of activity." evidence="12">
    <original>I</original>
    <variation>F</variation>
    <location>
        <position position="490"/>
    </location>
</feature>
<feature type="sequence variant" id="VAR_014001" description="In HOPS; dbSNP:rs1413274209." evidence="6 49">
    <original>G</original>
    <variation>R</variation>
    <location>
        <position position="491"/>
    </location>
</feature>
<feature type="sequence variant" id="VAR_011094" description="In dbSNP:rs34605986." evidence="8 14 16">
    <original>V</original>
    <variation>A</variation>
    <location>
        <position position="522"/>
    </location>
</feature>
<feature type="mutagenesis site" description="Abolished alkaline phosphatase activity." evidence="35">
    <original>E</original>
    <variation>A</variation>
    <location>
        <position position="235"/>
    </location>
</feature>
<feature type="mutagenesis site" description="Reduced alkaline phosphatase activity." evidence="35">
    <original>W</original>
    <variation>A</variation>
    <location>
        <position position="270"/>
    </location>
</feature>
<feature type="mutagenesis site" description="Reduced alkaline phosphatase activity." evidence="35">
    <original>R</original>
    <variation>A</variation>
    <location>
        <position position="272"/>
    </location>
</feature>
<feature type="mutagenesis site" description="Abolished alkaline phosphatase activity." evidence="35">
    <original>F</original>
    <variation>A</variation>
    <location>
        <position position="290"/>
    </location>
</feature>
<feature type="mutagenesis site" description="Reduced alkaline phosphatase activity." evidence="35">
    <original>E</original>
    <variation>A</variation>
    <location>
        <position position="291"/>
    </location>
</feature>
<feature type="mutagenesis site" description="Abolished alkaline phosphatase activity." evidence="35">
    <original>D</original>
    <variation>A</variation>
    <location>
        <position position="306"/>
    </location>
</feature>
<feature type="sequence conflict" description="In Ref. 10; AA sequence." evidence="55" ref="10">
    <original>W</original>
    <variation>A</variation>
    <location>
        <position position="29"/>
    </location>
</feature>
<feature type="sequence conflict" description="In Ref. 3; CAA32376." evidence="55" ref="3">
    <original>N</original>
    <variation>K</variation>
    <location>
        <position position="104"/>
    </location>
</feature>
<feature type="sequence conflict" description="In Ref. 1; BAA32129." evidence="55" ref="1">
    <original>Q</original>
    <variation>H</variation>
    <location>
        <position position="361"/>
    </location>
</feature>
<feature type="sequence conflict" description="In Ref. 1; BAA32129." evidence="55" ref="1">
    <original>A</original>
    <variation>P</variation>
    <location>
        <position position="446"/>
    </location>
</feature>
<feature type="helix" evidence="58">
    <location>
        <begin position="21"/>
        <end position="24"/>
    </location>
</feature>
<feature type="helix" evidence="58">
    <location>
        <begin position="26"/>
        <end position="42"/>
    </location>
</feature>
<feature type="strand" evidence="58">
    <location>
        <begin position="52"/>
        <end position="59"/>
    </location>
</feature>
<feature type="helix" evidence="58">
    <location>
        <begin position="65"/>
        <end position="77"/>
    </location>
</feature>
<feature type="turn" evidence="58">
    <location>
        <begin position="88"/>
        <end position="91"/>
    </location>
</feature>
<feature type="strand" evidence="58">
    <location>
        <begin position="93"/>
        <end position="99"/>
    </location>
</feature>
<feature type="strand" evidence="58">
    <location>
        <begin position="103"/>
        <end position="107"/>
    </location>
</feature>
<feature type="helix" evidence="58">
    <location>
        <begin position="111"/>
        <end position="119"/>
    </location>
</feature>
<feature type="strand" evidence="58">
    <location>
        <begin position="128"/>
        <end position="130"/>
    </location>
</feature>
<feature type="helix" evidence="58">
    <location>
        <begin position="139"/>
        <end position="141"/>
    </location>
</feature>
<feature type="helix" evidence="58">
    <location>
        <begin position="150"/>
        <end position="156"/>
    </location>
</feature>
<feature type="strand" evidence="58">
    <location>
        <begin position="160"/>
        <end position="168"/>
    </location>
</feature>
<feature type="helix" evidence="58">
    <location>
        <begin position="172"/>
        <end position="175"/>
    </location>
</feature>
<feature type="turn" evidence="58">
    <location>
        <begin position="176"/>
        <end position="178"/>
    </location>
</feature>
<feature type="turn" evidence="57">
    <location>
        <begin position="189"/>
        <end position="191"/>
    </location>
</feature>
<feature type="helix" evidence="58">
    <location>
        <begin position="194"/>
        <end position="198"/>
    </location>
</feature>
<feature type="helix" evidence="58">
    <location>
        <begin position="204"/>
        <end position="210"/>
    </location>
</feature>
<feature type="strand" evidence="58">
    <location>
        <begin position="217"/>
        <end position="221"/>
    </location>
</feature>
<feature type="strand" evidence="58">
    <location>
        <begin position="224"/>
        <end position="228"/>
    </location>
</feature>
<feature type="strand" evidence="58">
    <location>
        <begin position="240"/>
        <end position="243"/>
    </location>
</feature>
<feature type="strand" evidence="58">
    <location>
        <begin position="246"/>
        <end position="248"/>
    </location>
</feature>
<feature type="helix" evidence="58">
    <location>
        <begin position="252"/>
        <end position="257"/>
    </location>
</feature>
<feature type="helix" evidence="58">
    <location>
        <begin position="272"/>
        <end position="277"/>
    </location>
</feature>
<feature type="helix" evidence="58">
    <location>
        <begin position="280"/>
        <end position="282"/>
    </location>
</feature>
<feature type="strand" evidence="58">
    <location>
        <begin position="284"/>
        <end position="289"/>
    </location>
</feature>
<feature type="strand" evidence="58">
    <location>
        <begin position="291"/>
        <end position="294"/>
    </location>
</feature>
<feature type="helix" evidence="57">
    <location>
        <begin position="298"/>
        <end position="300"/>
    </location>
</feature>
<feature type="turn" evidence="58">
    <location>
        <begin position="303"/>
        <end position="305"/>
    </location>
</feature>
<feature type="helix" evidence="58">
    <location>
        <begin position="309"/>
        <end position="320"/>
    </location>
</feature>
<feature type="strand" evidence="58">
    <location>
        <begin position="327"/>
        <end position="333"/>
    </location>
</feature>
<feature type="helix" evidence="58">
    <location>
        <begin position="335"/>
        <end position="342"/>
    </location>
</feature>
<feature type="helix" evidence="58">
    <location>
        <begin position="345"/>
        <end position="365"/>
    </location>
</feature>
<feature type="strand" evidence="58">
    <location>
        <begin position="370"/>
        <end position="378"/>
    </location>
</feature>
<feature type="strand" evidence="58">
    <location>
        <begin position="383"/>
        <end position="385"/>
    </location>
</feature>
<feature type="turn" evidence="58">
    <location>
        <begin position="404"/>
        <end position="406"/>
    </location>
</feature>
<feature type="strand" evidence="58">
    <location>
        <begin position="411"/>
        <end position="418"/>
    </location>
</feature>
<feature type="helix" evidence="58">
    <location>
        <begin position="431"/>
        <end position="433"/>
    </location>
</feature>
<feature type="strand" evidence="58">
    <location>
        <begin position="445"/>
        <end position="448"/>
    </location>
</feature>
<feature type="strand" evidence="58">
    <location>
        <begin position="459"/>
        <end position="465"/>
    </location>
</feature>
<feature type="helix" evidence="58">
    <location>
        <begin position="468"/>
        <end position="470"/>
    </location>
</feature>
<feature type="strand" evidence="58">
    <location>
        <begin position="473"/>
        <end position="476"/>
    </location>
</feature>
<feature type="helix" evidence="58">
    <location>
        <begin position="477"/>
        <end position="479"/>
    </location>
</feature>
<feature type="helix" evidence="58">
    <location>
        <begin position="480"/>
        <end position="487"/>
    </location>
</feature>
<feature type="helix" evidence="57">
    <location>
        <begin position="495"/>
        <end position="497"/>
    </location>
</feature>
<evidence type="ECO:0000250" key="1">
    <source>
        <dbReference type="UniProtKB" id="P05187"/>
    </source>
</evidence>
<evidence type="ECO:0000250" key="2">
    <source>
        <dbReference type="UniProtKB" id="P09242"/>
    </source>
</evidence>
<evidence type="ECO:0000255" key="3"/>
<evidence type="ECO:0000255" key="4">
    <source>
        <dbReference type="PROSITE-ProRule" id="PRU10042"/>
    </source>
</evidence>
<evidence type="ECO:0000269" key="5">
    <source>
    </source>
</evidence>
<evidence type="ECO:0000269" key="6">
    <source>
    </source>
</evidence>
<evidence type="ECO:0000269" key="7">
    <source>
    </source>
</evidence>
<evidence type="ECO:0000269" key="8">
    <source>
    </source>
</evidence>
<evidence type="ECO:0000269" key="9">
    <source>
    </source>
</evidence>
<evidence type="ECO:0000269" key="10">
    <source>
    </source>
</evidence>
<evidence type="ECO:0000269" key="11">
    <source>
    </source>
</evidence>
<evidence type="ECO:0000269" key="12">
    <source>
    </source>
</evidence>
<evidence type="ECO:0000269" key="13">
    <source>
    </source>
</evidence>
<evidence type="ECO:0000269" key="14">
    <source>
    </source>
</evidence>
<evidence type="ECO:0000269" key="15">
    <source>
    </source>
</evidence>
<evidence type="ECO:0000269" key="16">
    <source>
    </source>
</evidence>
<evidence type="ECO:0000269" key="17">
    <source>
    </source>
</evidence>
<evidence type="ECO:0000269" key="18">
    <source>
    </source>
</evidence>
<evidence type="ECO:0000269" key="19">
    <source>
    </source>
</evidence>
<evidence type="ECO:0000269" key="20">
    <source>
    </source>
</evidence>
<evidence type="ECO:0000269" key="21">
    <source>
    </source>
</evidence>
<evidence type="ECO:0000269" key="22">
    <source>
    </source>
</evidence>
<evidence type="ECO:0000269" key="23">
    <source>
    </source>
</evidence>
<evidence type="ECO:0000269" key="24">
    <source>
    </source>
</evidence>
<evidence type="ECO:0000269" key="25">
    <source>
    </source>
</evidence>
<evidence type="ECO:0000269" key="26">
    <source>
    </source>
</evidence>
<evidence type="ECO:0000269" key="27">
    <source>
    </source>
</evidence>
<evidence type="ECO:0000269" key="28">
    <source>
    </source>
</evidence>
<evidence type="ECO:0000269" key="29">
    <source>
    </source>
</evidence>
<evidence type="ECO:0000269" key="30">
    <source>
    </source>
</evidence>
<evidence type="ECO:0000269" key="31">
    <source>
    </source>
</evidence>
<evidence type="ECO:0000269" key="32">
    <source>
    </source>
</evidence>
<evidence type="ECO:0000269" key="33">
    <source>
    </source>
</evidence>
<evidence type="ECO:0000269" key="34">
    <source>
    </source>
</evidence>
<evidence type="ECO:0000269" key="35">
    <source>
    </source>
</evidence>
<evidence type="ECO:0000269" key="36">
    <source>
    </source>
</evidence>
<evidence type="ECO:0000269" key="37">
    <source>
    </source>
</evidence>
<evidence type="ECO:0000269" key="38">
    <source>
    </source>
</evidence>
<evidence type="ECO:0000269" key="39">
    <source>
    </source>
</evidence>
<evidence type="ECO:0000269" key="40">
    <source>
    </source>
</evidence>
<evidence type="ECO:0000269" key="41">
    <source>
    </source>
</evidence>
<evidence type="ECO:0000269" key="42">
    <source>
    </source>
</evidence>
<evidence type="ECO:0000269" key="43">
    <source>
    </source>
</evidence>
<evidence type="ECO:0000269" key="44">
    <source>
    </source>
</evidence>
<evidence type="ECO:0000269" key="45">
    <source>
    </source>
</evidence>
<evidence type="ECO:0000269" key="46">
    <source>
    </source>
</evidence>
<evidence type="ECO:0000269" key="47">
    <source>
    </source>
</evidence>
<evidence type="ECO:0000269" key="48">
    <source>
    </source>
</evidence>
<evidence type="ECO:0000269" key="49">
    <source>
    </source>
</evidence>
<evidence type="ECO:0000269" key="50">
    <source ref="6"/>
</evidence>
<evidence type="ECO:0000303" key="51">
    <source>
    </source>
</evidence>
<evidence type="ECO:0000303" key="52">
    <source>
    </source>
</evidence>
<evidence type="ECO:0000303" key="53">
    <source>
    </source>
</evidence>
<evidence type="ECO:0000303" key="54">
    <source>
    </source>
</evidence>
<evidence type="ECO:0000305" key="55"/>
<evidence type="ECO:0000312" key="56">
    <source>
        <dbReference type="HGNC" id="HGNC:438"/>
    </source>
</evidence>
<evidence type="ECO:0007829" key="57">
    <source>
        <dbReference type="PDB" id="7YIV"/>
    </source>
</evidence>
<evidence type="ECO:0007829" key="58">
    <source>
        <dbReference type="PDB" id="7YIX"/>
    </source>
</evidence>
<gene>
    <name evidence="54 56" type="primary">ALPL</name>
</gene>
<dbReference type="EC" id="3.1.3.1" evidence="30 32 33 36"/>
<dbReference type="EC" id="3.9.1.1" evidence="2"/>
<dbReference type="EMBL" id="M24439">
    <property type="protein sequence ID" value="AAB59378.1"/>
    <property type="molecule type" value="Genomic_DNA"/>
</dbReference>
<dbReference type="EMBL" id="M24429">
    <property type="protein sequence ID" value="AAB59378.1"/>
    <property type="status" value="JOINED"/>
    <property type="molecule type" value="Genomic_DNA"/>
</dbReference>
<dbReference type="EMBL" id="M24430">
    <property type="protein sequence ID" value="AAB59378.1"/>
    <property type="status" value="JOINED"/>
    <property type="molecule type" value="Genomic_DNA"/>
</dbReference>
<dbReference type="EMBL" id="M24431">
    <property type="protein sequence ID" value="AAB59378.1"/>
    <property type="status" value="JOINED"/>
    <property type="molecule type" value="Genomic_DNA"/>
</dbReference>
<dbReference type="EMBL" id="M24432">
    <property type="protein sequence ID" value="AAB59378.1"/>
    <property type="status" value="JOINED"/>
    <property type="molecule type" value="Genomic_DNA"/>
</dbReference>
<dbReference type="EMBL" id="M24433">
    <property type="protein sequence ID" value="AAB59378.1"/>
    <property type="status" value="JOINED"/>
    <property type="molecule type" value="Genomic_DNA"/>
</dbReference>
<dbReference type="EMBL" id="M24434">
    <property type="protein sequence ID" value="AAB59378.1"/>
    <property type="status" value="JOINED"/>
    <property type="molecule type" value="Genomic_DNA"/>
</dbReference>
<dbReference type="EMBL" id="M24435">
    <property type="protein sequence ID" value="AAB59378.1"/>
    <property type="status" value="JOINED"/>
    <property type="molecule type" value="Genomic_DNA"/>
</dbReference>
<dbReference type="EMBL" id="M24436">
    <property type="protein sequence ID" value="AAB59378.1"/>
    <property type="status" value="JOINED"/>
    <property type="molecule type" value="Genomic_DNA"/>
</dbReference>
<dbReference type="EMBL" id="M24437">
    <property type="protein sequence ID" value="AAB59378.1"/>
    <property type="status" value="JOINED"/>
    <property type="molecule type" value="Genomic_DNA"/>
</dbReference>
<dbReference type="EMBL" id="M24438">
    <property type="protein sequence ID" value="AAB59378.1"/>
    <property type="status" value="JOINED"/>
    <property type="molecule type" value="Genomic_DNA"/>
</dbReference>
<dbReference type="EMBL" id="X14174">
    <property type="protein sequence ID" value="CAA32376.1"/>
    <property type="molecule type" value="mRNA"/>
</dbReference>
<dbReference type="EMBL" id="AB011406">
    <property type="protein sequence ID" value="BAA32129.1"/>
    <property type="molecule type" value="mRNA"/>
</dbReference>
<dbReference type="EMBL" id="AK295608">
    <property type="protein sequence ID" value="BAH12123.1"/>
    <property type="molecule type" value="mRNA"/>
</dbReference>
<dbReference type="EMBL" id="AK298085">
    <property type="protein sequence ID" value="BAH12722.1"/>
    <property type="molecule type" value="mRNA"/>
</dbReference>
<dbReference type="EMBL" id="AB209814">
    <property type="protein sequence ID" value="BAD93051.1"/>
    <property type="status" value="ALT_INIT"/>
    <property type="molecule type" value="mRNA"/>
</dbReference>
<dbReference type="EMBL" id="AL592309">
    <property type="status" value="NOT_ANNOTATED_CDS"/>
    <property type="molecule type" value="Genomic_DNA"/>
</dbReference>
<dbReference type="EMBL" id="AL359815">
    <property type="status" value="NOT_ANNOTATED_CDS"/>
    <property type="molecule type" value="Genomic_DNA"/>
</dbReference>
<dbReference type="EMBL" id="CH471134">
    <property type="protein sequence ID" value="EAW94977.1"/>
    <property type="molecule type" value="Genomic_DNA"/>
</dbReference>
<dbReference type="EMBL" id="BC021289">
    <property type="protein sequence ID" value="AAH21289.3"/>
    <property type="molecule type" value="mRNA"/>
</dbReference>
<dbReference type="EMBL" id="BC066116">
    <property type="protein sequence ID" value="AAH66116.2"/>
    <property type="molecule type" value="mRNA"/>
</dbReference>
<dbReference type="EMBL" id="BC090861">
    <property type="protein sequence ID" value="AAH90861.2"/>
    <property type="molecule type" value="mRNA"/>
</dbReference>
<dbReference type="EMBL" id="BC110909">
    <property type="protein sequence ID" value="AAI10910.2"/>
    <property type="molecule type" value="mRNA"/>
</dbReference>
<dbReference type="EMBL" id="BC126165">
    <property type="protein sequence ID" value="AAI26166.1"/>
    <property type="molecule type" value="mRNA"/>
</dbReference>
<dbReference type="EMBL" id="BC136325">
    <property type="protein sequence ID" value="AAI36326.1"/>
    <property type="molecule type" value="mRNA"/>
</dbReference>
<dbReference type="CCDS" id="CCDS217.1">
    <molecule id="P05186-1"/>
</dbReference>
<dbReference type="CCDS" id="CCDS53274.1">
    <molecule id="P05186-2"/>
</dbReference>
<dbReference type="CCDS" id="CCDS53275.1">
    <molecule id="P05186-3"/>
</dbReference>
<dbReference type="PIR" id="S03613">
    <property type="entry name" value="PAHUH"/>
</dbReference>
<dbReference type="RefSeq" id="NP_000469.3">
    <molecule id="P05186-1"/>
    <property type="nucleotide sequence ID" value="NM_000478.5"/>
</dbReference>
<dbReference type="RefSeq" id="NP_001120973.2">
    <molecule id="P05186-3"/>
    <property type="nucleotide sequence ID" value="NM_001127501.4"/>
</dbReference>
<dbReference type="RefSeq" id="NP_001170991.1">
    <molecule id="P05186-2"/>
    <property type="nucleotide sequence ID" value="NM_001177520.3"/>
</dbReference>
<dbReference type="RefSeq" id="NP_001356732.1">
    <molecule id="P05186-1"/>
    <property type="nucleotide sequence ID" value="NM_001369803.2"/>
</dbReference>
<dbReference type="RefSeq" id="NP_001356733.1">
    <molecule id="P05186-1"/>
    <property type="nucleotide sequence ID" value="NM_001369804.2"/>
</dbReference>
<dbReference type="RefSeq" id="NP_001356734.1">
    <molecule id="P05186-1"/>
    <property type="nucleotide sequence ID" value="NM_001369805.2"/>
</dbReference>
<dbReference type="RefSeq" id="XP_005245875.1">
    <property type="nucleotide sequence ID" value="XM_005245818.1"/>
</dbReference>
<dbReference type="RefSeq" id="XP_006710609.1">
    <property type="nucleotide sequence ID" value="XM_006710546.2"/>
</dbReference>
<dbReference type="PDB" id="7YIV">
    <property type="method" value="X-ray"/>
    <property type="resolution" value="3.18 A"/>
    <property type="chains" value="A/B/C/D/E/F/G/H=18-500"/>
</dbReference>
<dbReference type="PDB" id="7YIW">
    <property type="method" value="X-ray"/>
    <property type="resolution" value="2.89 A"/>
    <property type="chains" value="A/B/C/D/E/F/G/H=18-500"/>
</dbReference>
<dbReference type="PDB" id="7YIX">
    <property type="method" value="EM"/>
    <property type="resolution" value="2.96 A"/>
    <property type="chains" value="A/B=18-500"/>
</dbReference>
<dbReference type="PDBsum" id="7YIV"/>
<dbReference type="PDBsum" id="7YIW"/>
<dbReference type="PDBsum" id="7YIX"/>
<dbReference type="EMDB" id="EMD-33865"/>
<dbReference type="SMR" id="P05186"/>
<dbReference type="BioGRID" id="106750">
    <property type="interactions" value="32"/>
</dbReference>
<dbReference type="FunCoup" id="P05186">
    <property type="interactions" value="237"/>
</dbReference>
<dbReference type="IntAct" id="P05186">
    <property type="interactions" value="10"/>
</dbReference>
<dbReference type="MINT" id="P05186"/>
<dbReference type="STRING" id="9606.ENSP00000363973"/>
<dbReference type="BindingDB" id="P05186"/>
<dbReference type="ChEMBL" id="CHEMBL5979"/>
<dbReference type="DrugBank" id="DB01143">
    <property type="generic name" value="Amifostine"/>
</dbReference>
<dbReference type="DrugBank" id="DB17837">
    <property type="generic name" value="DS-1211"/>
</dbReference>
<dbReference type="DrugBank" id="DB00848">
    <property type="generic name" value="Levamisole"/>
</dbReference>
<dbReference type="DrugBank" id="DB09338">
    <property type="generic name" value="Mersalyl"/>
</dbReference>
<dbReference type="DrugBank" id="DB00165">
    <property type="generic name" value="Pyridoxine"/>
</dbReference>
<dbReference type="DrugBank" id="DB09498">
    <property type="generic name" value="Strontium chloride Sr-89"/>
</dbReference>
<dbReference type="DrugCentral" id="P05186"/>
<dbReference type="DEPOD" id="ALPL"/>
<dbReference type="GlyConnect" id="1916">
    <property type="glycosylation" value="7 N-Linked glycans (2 sites)"/>
</dbReference>
<dbReference type="GlyCosmos" id="P05186">
    <property type="glycosylation" value="6 sites, 8 glycans"/>
</dbReference>
<dbReference type="GlyGen" id="P05186">
    <property type="glycosylation" value="11 sites, 37 N-linked glycans (4 sites), 1 O-linked glycan (2 sites)"/>
</dbReference>
<dbReference type="iPTMnet" id="P05186"/>
<dbReference type="PhosphoSitePlus" id="P05186"/>
<dbReference type="BioMuta" id="ALPL"/>
<dbReference type="DMDM" id="68067533"/>
<dbReference type="jPOST" id="P05186"/>
<dbReference type="MassIVE" id="P05186"/>
<dbReference type="PaxDb" id="9606-ENSP00000363973"/>
<dbReference type="PeptideAtlas" id="P05186"/>
<dbReference type="ProteomicsDB" id="51821">
    <molecule id="P05186-1"/>
</dbReference>
<dbReference type="ProteomicsDB" id="51822">
    <molecule id="P05186-2"/>
</dbReference>
<dbReference type="ProteomicsDB" id="6645"/>
<dbReference type="Pumba" id="P05186"/>
<dbReference type="ABCD" id="P05186">
    <property type="antibodies" value="4 sequenced antibodies"/>
</dbReference>
<dbReference type="Antibodypedia" id="2059">
    <property type="antibodies" value="1071 antibodies from 44 providers"/>
</dbReference>
<dbReference type="DNASU" id="249"/>
<dbReference type="Ensembl" id="ENST00000374832.5">
    <molecule id="P05186-1"/>
    <property type="protein sequence ID" value="ENSP00000363965.1"/>
    <property type="gene ID" value="ENSG00000162551.14"/>
</dbReference>
<dbReference type="Ensembl" id="ENST00000374840.8">
    <molecule id="P05186-1"/>
    <property type="protein sequence ID" value="ENSP00000363973.3"/>
    <property type="gene ID" value="ENSG00000162551.14"/>
</dbReference>
<dbReference type="Ensembl" id="ENST00000539907.5">
    <molecule id="P05186-2"/>
    <property type="protein sequence ID" value="ENSP00000437674.1"/>
    <property type="gene ID" value="ENSG00000162551.14"/>
</dbReference>
<dbReference type="Ensembl" id="ENST00000540617.5">
    <molecule id="P05186-3"/>
    <property type="protein sequence ID" value="ENSP00000442672.1"/>
    <property type="gene ID" value="ENSG00000162551.14"/>
</dbReference>
<dbReference type="GeneID" id="249"/>
<dbReference type="KEGG" id="hsa:249"/>
<dbReference type="MANE-Select" id="ENST00000374840.8">
    <property type="protein sequence ID" value="ENSP00000363973.3"/>
    <property type="RefSeq nucleotide sequence ID" value="NM_000478.6"/>
    <property type="RefSeq protein sequence ID" value="NP_000469.3"/>
</dbReference>
<dbReference type="UCSC" id="uc001bet.4">
    <molecule id="P05186-1"/>
    <property type="organism name" value="human"/>
</dbReference>
<dbReference type="AGR" id="HGNC:438"/>
<dbReference type="CTD" id="249"/>
<dbReference type="DisGeNET" id="249"/>
<dbReference type="GeneCards" id="ALPL"/>
<dbReference type="GeneReviews" id="ALPL"/>
<dbReference type="HGNC" id="HGNC:438">
    <property type="gene designation" value="ALPL"/>
</dbReference>
<dbReference type="HPA" id="ENSG00000162551">
    <property type="expression patterns" value="Tissue enhanced (adrenal)"/>
</dbReference>
<dbReference type="MalaCards" id="ALPL"/>
<dbReference type="MIM" id="146300">
    <property type="type" value="phenotype"/>
</dbReference>
<dbReference type="MIM" id="171760">
    <property type="type" value="gene"/>
</dbReference>
<dbReference type="MIM" id="241500">
    <property type="type" value="phenotype"/>
</dbReference>
<dbReference type="MIM" id="241510">
    <property type="type" value="phenotype"/>
</dbReference>
<dbReference type="neXtProt" id="NX_P05186"/>
<dbReference type="OpenTargets" id="ENSG00000162551"/>
<dbReference type="Orphanet" id="247676">
    <property type="disease" value="Adult hypophosphatasia"/>
</dbReference>
<dbReference type="Orphanet" id="247667">
    <property type="disease" value="Childhood-onset hypophosphatasia"/>
</dbReference>
<dbReference type="Orphanet" id="247651">
    <property type="disease" value="Infantile hypophosphatasia"/>
</dbReference>
<dbReference type="Orphanet" id="247685">
    <property type="disease" value="Odontohypophosphatasia"/>
</dbReference>
<dbReference type="Orphanet" id="247623">
    <property type="disease" value="Perinatal lethal hypophosphatasia"/>
</dbReference>
<dbReference type="Orphanet" id="247638">
    <property type="disease" value="Prenatal benign hypophosphatasia"/>
</dbReference>
<dbReference type="PharmGKB" id="PA24729"/>
<dbReference type="VEuPathDB" id="HostDB:ENSG00000162551"/>
<dbReference type="eggNOG" id="KOG4126">
    <property type="taxonomic scope" value="Eukaryota"/>
</dbReference>
<dbReference type="GeneTree" id="ENSGT00950000183063"/>
<dbReference type="HOGENOM" id="CLU_008539_4_0_1"/>
<dbReference type="InParanoid" id="P05186"/>
<dbReference type="OMA" id="YQLMHNV"/>
<dbReference type="OrthoDB" id="5818554at2759"/>
<dbReference type="PAN-GO" id="P05186">
    <property type="GO annotations" value="3 GO annotations based on evolutionary models"/>
</dbReference>
<dbReference type="PhylomeDB" id="P05186"/>
<dbReference type="TreeFam" id="TF323513"/>
<dbReference type="BRENDA" id="3.1.3.1">
    <property type="organism ID" value="2681"/>
</dbReference>
<dbReference type="PathwayCommons" id="P05186"/>
<dbReference type="Reactome" id="R-HSA-163125">
    <property type="pathway name" value="Post-translational modification: synthesis of GPI-anchored proteins"/>
</dbReference>
<dbReference type="SABIO-RK" id="P05186"/>
<dbReference type="SignaLink" id="P05186"/>
<dbReference type="SIGNOR" id="P05186"/>
<dbReference type="BioGRID-ORCS" id="249">
    <property type="hits" value="5 hits in 1161 CRISPR screens"/>
</dbReference>
<dbReference type="ChiTaRS" id="ALPL">
    <property type="organism name" value="human"/>
</dbReference>
<dbReference type="GeneWiki" id="ALPL"/>
<dbReference type="GenomeRNAi" id="249"/>
<dbReference type="Pharos" id="P05186">
    <property type="development level" value="Tchem"/>
</dbReference>
<dbReference type="PRO" id="PR:P05186"/>
<dbReference type="Proteomes" id="UP000005640">
    <property type="component" value="Chromosome 1"/>
</dbReference>
<dbReference type="RNAct" id="P05186">
    <property type="molecule type" value="protein"/>
</dbReference>
<dbReference type="Bgee" id="ENSG00000162551">
    <property type="expression patterns" value="Expressed in right adrenal gland and 129 other cell types or tissues"/>
</dbReference>
<dbReference type="ExpressionAtlas" id="P05186">
    <property type="expression patterns" value="baseline and differential"/>
</dbReference>
<dbReference type="GO" id="GO:0070062">
    <property type="term" value="C:extracellular exosome"/>
    <property type="evidence" value="ECO:0007005"/>
    <property type="project" value="UniProtKB"/>
</dbReference>
<dbReference type="GO" id="GO:0031012">
    <property type="term" value="C:extracellular matrix"/>
    <property type="evidence" value="ECO:0007669"/>
    <property type="project" value="Ensembl"/>
</dbReference>
<dbReference type="GO" id="GO:0005576">
    <property type="term" value="C:extracellular region"/>
    <property type="evidence" value="ECO:0000304"/>
    <property type="project" value="Reactome"/>
</dbReference>
<dbReference type="GO" id="GO:0016020">
    <property type="term" value="C:membrane"/>
    <property type="evidence" value="ECO:0007005"/>
    <property type="project" value="UniProtKB"/>
</dbReference>
<dbReference type="GO" id="GO:0005758">
    <property type="term" value="C:mitochondrial intermembrane space"/>
    <property type="evidence" value="ECO:0000250"/>
    <property type="project" value="UniProtKB"/>
</dbReference>
<dbReference type="GO" id="GO:0031966">
    <property type="term" value="C:mitochondrial membrane"/>
    <property type="evidence" value="ECO:0000250"/>
    <property type="project" value="UniProtKB"/>
</dbReference>
<dbReference type="GO" id="GO:0005886">
    <property type="term" value="C:plasma membrane"/>
    <property type="evidence" value="ECO:0000314"/>
    <property type="project" value="UniProtKB"/>
</dbReference>
<dbReference type="GO" id="GO:0098552">
    <property type="term" value="C:side of membrane"/>
    <property type="evidence" value="ECO:0007669"/>
    <property type="project" value="UniProtKB-KW"/>
</dbReference>
<dbReference type="GO" id="GO:0043262">
    <property type="term" value="F:ADP phosphatase activity"/>
    <property type="evidence" value="ECO:0007669"/>
    <property type="project" value="RHEA"/>
</dbReference>
<dbReference type="GO" id="GO:0004035">
    <property type="term" value="F:alkaline phosphatase activity"/>
    <property type="evidence" value="ECO:0000314"/>
    <property type="project" value="UniProtKB"/>
</dbReference>
<dbReference type="GO" id="GO:0016887">
    <property type="term" value="F:ATP hydrolysis activity"/>
    <property type="evidence" value="ECO:0007669"/>
    <property type="project" value="RHEA"/>
</dbReference>
<dbReference type="GO" id="GO:0005509">
    <property type="term" value="F:calcium ion binding"/>
    <property type="evidence" value="ECO:0000314"/>
    <property type="project" value="UniProtKB"/>
</dbReference>
<dbReference type="GO" id="GO:0004427">
    <property type="term" value="F:inorganic diphosphate phosphatase activity"/>
    <property type="evidence" value="ECO:0007669"/>
    <property type="project" value="RHEA"/>
</dbReference>
<dbReference type="GO" id="GO:0050187">
    <property type="term" value="F:phosphoamidase activity"/>
    <property type="evidence" value="ECO:0000250"/>
    <property type="project" value="UniProtKB"/>
</dbReference>
<dbReference type="GO" id="GO:0052732">
    <property type="term" value="F:phosphoethanolamine phosphatase activity"/>
    <property type="evidence" value="ECO:0000314"/>
    <property type="project" value="UniProtKB"/>
</dbReference>
<dbReference type="GO" id="GO:0033883">
    <property type="term" value="F:pyridoxal phosphatase activity"/>
    <property type="evidence" value="ECO:0000314"/>
    <property type="project" value="UniProtKB"/>
</dbReference>
<dbReference type="GO" id="GO:0016462">
    <property type="term" value="F:pyrophosphatase activity"/>
    <property type="evidence" value="ECO:0000314"/>
    <property type="project" value="UniProtKB"/>
</dbReference>
<dbReference type="GO" id="GO:0031214">
    <property type="term" value="P:biomineral tissue development"/>
    <property type="evidence" value="ECO:0000318"/>
    <property type="project" value="GO_Central"/>
</dbReference>
<dbReference type="GO" id="GO:0030282">
    <property type="term" value="P:bone mineralization"/>
    <property type="evidence" value="ECO:0000250"/>
    <property type="project" value="UniProtKB"/>
</dbReference>
<dbReference type="GO" id="GO:0055074">
    <property type="term" value="P:calcium ion homeostasis"/>
    <property type="evidence" value="ECO:0000314"/>
    <property type="project" value="MGI"/>
</dbReference>
<dbReference type="GO" id="GO:0019725">
    <property type="term" value="P:cellular homeostasis"/>
    <property type="evidence" value="ECO:0007669"/>
    <property type="project" value="Ensembl"/>
</dbReference>
<dbReference type="GO" id="GO:0071529">
    <property type="term" value="P:cementum mineralization"/>
    <property type="evidence" value="ECO:0007669"/>
    <property type="project" value="Ensembl"/>
</dbReference>
<dbReference type="GO" id="GO:0003006">
    <property type="term" value="P:developmental process involved in reproduction"/>
    <property type="evidence" value="ECO:0007669"/>
    <property type="project" value="Ensembl"/>
</dbReference>
<dbReference type="GO" id="GO:0001958">
    <property type="term" value="P:endochondral ossification"/>
    <property type="evidence" value="ECO:0007669"/>
    <property type="project" value="Ensembl"/>
</dbReference>
<dbReference type="GO" id="GO:0140651">
    <property type="term" value="P:futile creatine cycle"/>
    <property type="evidence" value="ECO:0007669"/>
    <property type="project" value="Ensembl"/>
</dbReference>
<dbReference type="GO" id="GO:0140928">
    <property type="term" value="P:inhibition of non-skeletal tissue mineralization"/>
    <property type="evidence" value="ECO:0007669"/>
    <property type="project" value="Ensembl"/>
</dbReference>
<dbReference type="GO" id="GO:0001649">
    <property type="term" value="P:osteoblast differentiation"/>
    <property type="evidence" value="ECO:0007005"/>
    <property type="project" value="UniProtKB"/>
</dbReference>
<dbReference type="GO" id="GO:0055062">
    <property type="term" value="P:phosphate ion homeostasis"/>
    <property type="evidence" value="ECO:0007669"/>
    <property type="project" value="Ensembl"/>
</dbReference>
<dbReference type="GO" id="GO:0120162">
    <property type="term" value="P:positive regulation of cold-induced thermogenesis"/>
    <property type="evidence" value="ECO:0000250"/>
    <property type="project" value="UniProtKB"/>
</dbReference>
<dbReference type="GO" id="GO:0042822">
    <property type="term" value="P:pyridoxal phosphate metabolic process"/>
    <property type="evidence" value="ECO:0007669"/>
    <property type="project" value="Ensembl"/>
</dbReference>
<dbReference type="GO" id="GO:0046677">
    <property type="term" value="P:response to antibiotic"/>
    <property type="evidence" value="ECO:0007669"/>
    <property type="project" value="Ensembl"/>
</dbReference>
<dbReference type="GO" id="GO:0051384">
    <property type="term" value="P:response to glucocorticoid"/>
    <property type="evidence" value="ECO:0007669"/>
    <property type="project" value="Ensembl"/>
</dbReference>
<dbReference type="GO" id="GO:0032868">
    <property type="term" value="P:response to insulin"/>
    <property type="evidence" value="ECO:0007669"/>
    <property type="project" value="Ensembl"/>
</dbReference>
<dbReference type="GO" id="GO:0032496">
    <property type="term" value="P:response to lipopolysaccharide"/>
    <property type="evidence" value="ECO:0007669"/>
    <property type="project" value="Ensembl"/>
</dbReference>
<dbReference type="GO" id="GO:0036005">
    <property type="term" value="P:response to macrophage colony-stimulating factor"/>
    <property type="evidence" value="ECO:0007669"/>
    <property type="project" value="Ensembl"/>
</dbReference>
<dbReference type="GO" id="GO:1904383">
    <property type="term" value="P:response to sodium phosphate"/>
    <property type="evidence" value="ECO:0007669"/>
    <property type="project" value="Ensembl"/>
</dbReference>
<dbReference type="GO" id="GO:0034516">
    <property type="term" value="P:response to vitamin B6"/>
    <property type="evidence" value="ECO:0007669"/>
    <property type="project" value="Ensembl"/>
</dbReference>
<dbReference type="GO" id="GO:0033280">
    <property type="term" value="P:response to vitamin D"/>
    <property type="evidence" value="ECO:0000270"/>
    <property type="project" value="BHF-UCL"/>
</dbReference>
<dbReference type="GO" id="GO:0001501">
    <property type="term" value="P:skeletal system development"/>
    <property type="evidence" value="ECO:0000304"/>
    <property type="project" value="ProtInc"/>
</dbReference>
<dbReference type="CDD" id="cd16012">
    <property type="entry name" value="ALP"/>
    <property type="match status" value="1"/>
</dbReference>
<dbReference type="FunFam" id="3.40.720.10:FF:000008">
    <property type="entry name" value="Alkaline phosphatase"/>
    <property type="match status" value="1"/>
</dbReference>
<dbReference type="Gene3D" id="3.40.720.10">
    <property type="entry name" value="Alkaline Phosphatase, subunit A"/>
    <property type="match status" value="1"/>
</dbReference>
<dbReference type="InterPro" id="IPR001952">
    <property type="entry name" value="Alkaline_phosphatase"/>
</dbReference>
<dbReference type="InterPro" id="IPR018299">
    <property type="entry name" value="Alkaline_phosphatase_AS"/>
</dbReference>
<dbReference type="InterPro" id="IPR017850">
    <property type="entry name" value="Alkaline_phosphatase_core_sf"/>
</dbReference>
<dbReference type="PANTHER" id="PTHR11596">
    <property type="entry name" value="ALKALINE PHOSPHATASE"/>
    <property type="match status" value="1"/>
</dbReference>
<dbReference type="PANTHER" id="PTHR11596:SF74">
    <property type="entry name" value="ALKALINE PHOSPHATASE, TISSUE-NONSPECIFIC ISOZYME"/>
    <property type="match status" value="1"/>
</dbReference>
<dbReference type="Pfam" id="PF00245">
    <property type="entry name" value="Alk_phosphatase"/>
    <property type="match status" value="1"/>
</dbReference>
<dbReference type="PRINTS" id="PR00113">
    <property type="entry name" value="ALKPHPHTASE"/>
</dbReference>
<dbReference type="SMART" id="SM00098">
    <property type="entry name" value="alkPPc"/>
    <property type="match status" value="1"/>
</dbReference>
<dbReference type="SUPFAM" id="SSF53649">
    <property type="entry name" value="Alkaline phosphatase-like"/>
    <property type="match status" value="1"/>
</dbReference>
<dbReference type="PROSITE" id="PS00123">
    <property type="entry name" value="ALKALINE_PHOSPHATASE"/>
    <property type="match status" value="1"/>
</dbReference>
<accession>P05186</accession>
<accession>A1A4E7</accession>
<accession>B2RMP8</accession>
<accession>B7Z387</accession>
<accession>B7Z4Y6</accession>
<accession>O75090</accession>
<accession>Q2TAI7</accession>
<accession>Q59EJ7</accession>
<accession>Q5BKZ5</accession>
<accession>Q5VTG5</accession>
<accession>Q6NZI8</accession>
<accession>Q8WU32</accession>
<accession>Q9UBK0</accession>
<organism>
    <name type="scientific">Homo sapiens</name>
    <name type="common">Human</name>
    <dbReference type="NCBI Taxonomy" id="9606"/>
    <lineage>
        <taxon>Eukaryota</taxon>
        <taxon>Metazoa</taxon>
        <taxon>Chordata</taxon>
        <taxon>Craniata</taxon>
        <taxon>Vertebrata</taxon>
        <taxon>Euteleostomi</taxon>
        <taxon>Mammalia</taxon>
        <taxon>Eutheria</taxon>
        <taxon>Euarchontoglires</taxon>
        <taxon>Primates</taxon>
        <taxon>Haplorrhini</taxon>
        <taxon>Catarrhini</taxon>
        <taxon>Hominidae</taxon>
        <taxon>Homo</taxon>
    </lineage>
</organism>
<proteinExistence type="evidence at protein level"/>